<reference key="1">
    <citation type="journal article" date="1990" name="J. Clin. Invest.">
        <title>Molecular cloning, expression, and chromosome 19 localization of a human Ro/SS-A autoantigen.</title>
        <authorList>
            <person name="McCauliffe D.P."/>
            <person name="Lux F.A."/>
            <person name="Lieu T.S."/>
            <person name="Sanz I."/>
            <person name="Hanke J."/>
            <person name="Newkirk M.M."/>
            <person name="Bachinski L.L."/>
            <person name="Itoh Y."/>
            <person name="Siciliano M.J."/>
            <person name="Reichlin M."/>
            <person name="Sontheimer R.D."/>
            <person name="Capra J.D."/>
        </authorList>
    </citation>
    <scope>NUCLEOTIDE SEQUENCE [MRNA]</scope>
</reference>
<reference key="2">
    <citation type="journal article" date="1991" name="J. Immunol.">
        <title>Characterization of the autoantigen calreticulin.</title>
        <authorList>
            <person name="Rokeach L.A."/>
            <person name="Haselby J.A."/>
            <person name="Meilof J.F."/>
            <person name="Smeenk R.J."/>
            <person name="Unnasch T.R."/>
            <person name="Greene B.M."/>
            <person name="Hoch S.O."/>
        </authorList>
    </citation>
    <scope>NUCLEOTIDE SEQUENCE [MRNA]</scope>
</reference>
<reference key="3">
    <citation type="journal article" date="1992" name="J. Biol. Chem.">
        <title>The 5'-flanking region of the human calreticulin gene shares homology with the human GRP78, GRP94, and protein disulfide isomerase promoters.</title>
        <authorList>
            <person name="McCauliffe D.P."/>
            <person name="Yang Y.S."/>
            <person name="Wilson J."/>
            <person name="Sontheimer R.D."/>
            <person name="Capra J.D."/>
        </authorList>
    </citation>
    <scope>NUCLEOTIDE SEQUENCE [GENOMIC DNA]</scope>
</reference>
<reference key="4">
    <citation type="submission" date="2001-07" db="EMBL/GenBank/DDBJ databases">
        <authorList>
            <person name="Liu J."/>
            <person name="Peng X."/>
            <person name="Yuan J."/>
            <person name="Qiang B."/>
        </authorList>
    </citation>
    <scope>NUCLEOTIDE SEQUENCE [MRNA]</scope>
</reference>
<reference key="5">
    <citation type="journal article" date="2008" name="Nat. Methods">
        <title>Human protein factory for converting the transcriptome into an in vitro-expressed proteome.</title>
        <authorList>
            <person name="Goshima N."/>
            <person name="Kawamura Y."/>
            <person name="Fukumoto A."/>
            <person name="Miura A."/>
            <person name="Honma R."/>
            <person name="Satoh R."/>
            <person name="Wakamatsu A."/>
            <person name="Yamamoto J."/>
            <person name="Kimura K."/>
            <person name="Nishikawa T."/>
            <person name="Andoh T."/>
            <person name="Iida Y."/>
            <person name="Ishikawa K."/>
            <person name="Ito E."/>
            <person name="Kagawa N."/>
            <person name="Kaminaga C."/>
            <person name="Kanehori K."/>
            <person name="Kawakami B."/>
            <person name="Kenmochi K."/>
            <person name="Kimura R."/>
            <person name="Kobayashi M."/>
            <person name="Kuroita T."/>
            <person name="Kuwayama H."/>
            <person name="Maruyama Y."/>
            <person name="Matsuo K."/>
            <person name="Minami K."/>
            <person name="Mitsubori M."/>
            <person name="Mori M."/>
            <person name="Morishita R."/>
            <person name="Murase A."/>
            <person name="Nishikawa A."/>
            <person name="Nishikawa S."/>
            <person name="Okamoto T."/>
            <person name="Sakagami N."/>
            <person name="Sakamoto Y."/>
            <person name="Sasaki Y."/>
            <person name="Seki T."/>
            <person name="Sono S."/>
            <person name="Sugiyama A."/>
            <person name="Sumiya T."/>
            <person name="Takayama T."/>
            <person name="Takayama Y."/>
            <person name="Takeda H."/>
            <person name="Togashi T."/>
            <person name="Yahata K."/>
            <person name="Yamada H."/>
            <person name="Yanagisawa Y."/>
            <person name="Endo Y."/>
            <person name="Imamoto F."/>
            <person name="Kisu Y."/>
            <person name="Tanaka S."/>
            <person name="Isogai T."/>
            <person name="Imai J."/>
            <person name="Watanabe S."/>
            <person name="Nomura N."/>
        </authorList>
    </citation>
    <scope>NUCLEOTIDE SEQUENCE [LARGE SCALE MRNA]</scope>
</reference>
<reference key="6">
    <citation type="submission" date="2003-05" db="EMBL/GenBank/DDBJ databases">
        <title>Cloning of human full-length CDSs in BD Creator(TM) system donor vector.</title>
        <authorList>
            <person name="Kalnine N."/>
            <person name="Chen X."/>
            <person name="Rolfs A."/>
            <person name="Halleck A."/>
            <person name="Hines L."/>
            <person name="Eisenstein S."/>
            <person name="Koundinya M."/>
            <person name="Raphael J."/>
            <person name="Moreira D."/>
            <person name="Kelley T."/>
            <person name="LaBaer J."/>
            <person name="Lin Y."/>
            <person name="Phelan M."/>
            <person name="Farmer A."/>
        </authorList>
    </citation>
    <scope>NUCLEOTIDE SEQUENCE [LARGE SCALE MRNA]</scope>
</reference>
<reference key="7">
    <citation type="submission" date="2004-06" db="EMBL/GenBank/DDBJ databases">
        <title>Cloning of human full open reading frames in Gateway(TM) system entry vector (pDONR201).</title>
        <authorList>
            <person name="Ebert L."/>
            <person name="Schick M."/>
            <person name="Neubert P."/>
            <person name="Schatten R."/>
            <person name="Henze S."/>
            <person name="Korn B."/>
        </authorList>
    </citation>
    <scope>NUCLEOTIDE SEQUENCE [LARGE SCALE MRNA]</scope>
</reference>
<reference key="8">
    <citation type="journal article" date="2004" name="Nature">
        <title>The DNA sequence and biology of human chromosome 19.</title>
        <authorList>
            <person name="Grimwood J."/>
            <person name="Gordon L.A."/>
            <person name="Olsen A.S."/>
            <person name="Terry A."/>
            <person name="Schmutz J."/>
            <person name="Lamerdin J.E."/>
            <person name="Hellsten U."/>
            <person name="Goodstein D."/>
            <person name="Couronne O."/>
            <person name="Tran-Gyamfi M."/>
            <person name="Aerts A."/>
            <person name="Altherr M."/>
            <person name="Ashworth L."/>
            <person name="Bajorek E."/>
            <person name="Black S."/>
            <person name="Branscomb E."/>
            <person name="Caenepeel S."/>
            <person name="Carrano A.V."/>
            <person name="Caoile C."/>
            <person name="Chan Y.M."/>
            <person name="Christensen M."/>
            <person name="Cleland C.A."/>
            <person name="Copeland A."/>
            <person name="Dalin E."/>
            <person name="Dehal P."/>
            <person name="Denys M."/>
            <person name="Detter J.C."/>
            <person name="Escobar J."/>
            <person name="Flowers D."/>
            <person name="Fotopulos D."/>
            <person name="Garcia C."/>
            <person name="Georgescu A.M."/>
            <person name="Glavina T."/>
            <person name="Gomez M."/>
            <person name="Gonzales E."/>
            <person name="Groza M."/>
            <person name="Hammon N."/>
            <person name="Hawkins T."/>
            <person name="Haydu L."/>
            <person name="Ho I."/>
            <person name="Huang W."/>
            <person name="Israni S."/>
            <person name="Jett J."/>
            <person name="Kadner K."/>
            <person name="Kimball H."/>
            <person name="Kobayashi A."/>
            <person name="Larionov V."/>
            <person name="Leem S.-H."/>
            <person name="Lopez F."/>
            <person name="Lou Y."/>
            <person name="Lowry S."/>
            <person name="Malfatti S."/>
            <person name="Martinez D."/>
            <person name="McCready P.M."/>
            <person name="Medina C."/>
            <person name="Morgan J."/>
            <person name="Nelson K."/>
            <person name="Nolan M."/>
            <person name="Ovcharenko I."/>
            <person name="Pitluck S."/>
            <person name="Pollard M."/>
            <person name="Popkie A.P."/>
            <person name="Predki P."/>
            <person name="Quan G."/>
            <person name="Ramirez L."/>
            <person name="Rash S."/>
            <person name="Retterer J."/>
            <person name="Rodriguez A."/>
            <person name="Rogers S."/>
            <person name="Salamov A."/>
            <person name="Salazar A."/>
            <person name="She X."/>
            <person name="Smith D."/>
            <person name="Slezak T."/>
            <person name="Solovyev V."/>
            <person name="Thayer N."/>
            <person name="Tice H."/>
            <person name="Tsai M."/>
            <person name="Ustaszewska A."/>
            <person name="Vo N."/>
            <person name="Wagner M."/>
            <person name="Wheeler J."/>
            <person name="Wu K."/>
            <person name="Xie G."/>
            <person name="Yang J."/>
            <person name="Dubchak I."/>
            <person name="Furey T.S."/>
            <person name="DeJong P."/>
            <person name="Dickson M."/>
            <person name="Gordon D."/>
            <person name="Eichler E.E."/>
            <person name="Pennacchio L.A."/>
            <person name="Richardson P."/>
            <person name="Stubbs L."/>
            <person name="Rokhsar D.S."/>
            <person name="Myers R.M."/>
            <person name="Rubin E.M."/>
            <person name="Lucas S.M."/>
        </authorList>
    </citation>
    <scope>NUCLEOTIDE SEQUENCE [LARGE SCALE GENOMIC DNA]</scope>
</reference>
<reference key="9">
    <citation type="submission" date="2005-07" db="EMBL/GenBank/DDBJ databases">
        <authorList>
            <person name="Mural R.J."/>
            <person name="Istrail S."/>
            <person name="Sutton G.G."/>
            <person name="Florea L."/>
            <person name="Halpern A.L."/>
            <person name="Mobarry C.M."/>
            <person name="Lippert R."/>
            <person name="Walenz B."/>
            <person name="Shatkay H."/>
            <person name="Dew I."/>
            <person name="Miller J.R."/>
            <person name="Flanigan M.J."/>
            <person name="Edwards N.J."/>
            <person name="Bolanos R."/>
            <person name="Fasulo D."/>
            <person name="Halldorsson B.V."/>
            <person name="Hannenhalli S."/>
            <person name="Turner R."/>
            <person name="Yooseph S."/>
            <person name="Lu F."/>
            <person name="Nusskern D.R."/>
            <person name="Shue B.C."/>
            <person name="Zheng X.H."/>
            <person name="Zhong F."/>
            <person name="Delcher A.L."/>
            <person name="Huson D.H."/>
            <person name="Kravitz S.A."/>
            <person name="Mouchard L."/>
            <person name="Reinert K."/>
            <person name="Remington K.A."/>
            <person name="Clark A.G."/>
            <person name="Waterman M.S."/>
            <person name="Eichler E.E."/>
            <person name="Adams M.D."/>
            <person name="Hunkapiller M.W."/>
            <person name="Myers E.W."/>
            <person name="Venter J.C."/>
        </authorList>
    </citation>
    <scope>NUCLEOTIDE SEQUENCE [LARGE SCALE GENOMIC DNA]</scope>
</reference>
<reference key="10">
    <citation type="journal article" date="2004" name="Genome Res.">
        <title>The status, quality, and expansion of the NIH full-length cDNA project: the Mammalian Gene Collection (MGC).</title>
        <authorList>
            <consortium name="The MGC Project Team"/>
        </authorList>
    </citation>
    <scope>NUCLEOTIDE SEQUENCE [LARGE SCALE MRNA]</scope>
    <source>
        <tissue>Eye</tissue>
        <tissue>Pancreas</tissue>
        <tissue>Skin</tissue>
    </source>
</reference>
<reference key="11">
    <citation type="journal article" date="1994" name="Acta Chem. Scand.">
        <title>Human placental calreticulin: purification, characterization and association with other proteins.</title>
        <authorList>
            <person name="Houen G."/>
            <person name="Koch C."/>
        </authorList>
    </citation>
    <scope>PROTEIN SEQUENCE OF 18-48; 65-92; 96-114; 168-205 AND 257-354</scope>
    <source>
        <tissue>Placenta</tissue>
    </source>
</reference>
<reference key="12">
    <citation type="journal article" date="1988" name="J. Clin. Invest.">
        <title>Molecular characterization of human Ro/SS-A antigen. Amino terminal sequence of the protein moiety of human Ro/SS-A antigen and immunological activity of a corresponding synthetic peptide.</title>
        <authorList>
            <person name="Lieu T.-S."/>
            <person name="Newkirk M.M."/>
            <person name="Capra J.D."/>
            <person name="Sontheimer R.D."/>
        </authorList>
    </citation>
    <scope>PROTEIN SEQUENCE OF 18-41</scope>
</reference>
<reference key="13">
    <citation type="journal article" date="1991" name="Biochemistry">
        <title>In vitro interaction of a polypeptide homologous to human Ro/SS-A antigen (calreticulin) with a highly conserved amino acid sequence in the cytoplasmic domain of integrin alpha subunits.</title>
        <authorList>
            <person name="Rojiani M.V."/>
            <person name="Finlay B.B."/>
            <person name="Gray V."/>
            <person name="Dedhar S."/>
        </authorList>
    </citation>
    <scope>PROTEIN SEQUENCE OF 18-36</scope>
</reference>
<reference key="14">
    <citation type="journal article" date="1990" name="Biochem. J.">
        <title>Sequence similarity of calreticulin with a Ca2(+)-binding protein that co-purifies with an Ins(1,4,5)P3-sensitive Ca2+ store in HL-60 cells.</title>
        <authorList>
            <person name="Krause K.-H."/>
            <person name="Simmerman H.K.B."/>
            <person name="Jones L.R."/>
            <person name="Campbell K.P."/>
        </authorList>
    </citation>
    <scope>PROTEIN SEQUENCE OF 18-32</scope>
</reference>
<reference key="15">
    <citation type="journal article" date="1992" name="Electrophoresis">
        <title>Human liver protein map: a reference database established by microsequencing and gel comparison.</title>
        <authorList>
            <person name="Hochstrasser D.F."/>
            <person name="Frutiger S."/>
            <person name="Paquet N."/>
            <person name="Bairoch A."/>
            <person name="Ravier F."/>
            <person name="Pasquali C."/>
            <person name="Sanchez J.-C."/>
            <person name="Tissot J.-D."/>
            <person name="Bjellqvist B."/>
            <person name="Vargas R."/>
            <person name="Appel R.D."/>
            <person name="Hughes G.J."/>
        </authorList>
    </citation>
    <scope>PROTEIN SEQUENCE OF 18-28</scope>
    <source>
        <tissue>Liver</tissue>
    </source>
</reference>
<reference key="16">
    <citation type="submission" date="2008-12" db="UniProtKB">
        <authorList>
            <person name="Lubec G."/>
            <person name="Afjehi-Sadat L."/>
            <person name="Chen W.-Q."/>
            <person name="Sun Y."/>
        </authorList>
    </citation>
    <scope>PROTEIN SEQUENCE OF 25-36; 74-111 AND 208-222</scope>
    <scope>IDENTIFICATION BY MASS SPECTROMETRY</scope>
    <source>
        <tissue>Brain</tissue>
        <tissue>Cajal-Retzius cell</tissue>
        <tissue>Fetal brain cortex</tissue>
    </source>
</reference>
<reference key="17">
    <citation type="journal article" date="1992" name="Electrophoresis">
        <title>Microsequences of 145 proteins recorded in the two-dimensional gel protein database of normal human epidermal keratinocytes.</title>
        <authorList>
            <person name="Rasmussen H.H."/>
            <person name="van Damme J."/>
            <person name="Puype M."/>
            <person name="Gesser B."/>
            <person name="Celis J.E."/>
            <person name="Vandekerckhove J."/>
        </authorList>
    </citation>
    <scope>PROTEIN SEQUENCE OF 25-34; 56-62; 208-221 AND 273-278</scope>
    <source>
        <tissue>Keratinocyte</tissue>
    </source>
</reference>
<reference key="18">
    <citation type="journal article" date="1993" name="J. Exp. Med.">
        <title>The calcium-binding protein calreticulin is a major constituent of lytic granules in cytolytic T lymphocytes.</title>
        <authorList>
            <person name="Dupuis M."/>
            <person name="Schaerer E."/>
            <person name="Krause K.-H."/>
            <person name="Tschopp J."/>
        </authorList>
    </citation>
    <scope>PROTEIN SEQUENCE OF 18-27</scope>
    <scope>SUBCELLULAR LOCATION</scope>
</reference>
<reference key="19">
    <citation type="journal article" date="1997" name="Electrophoresis">
        <title>A two-dimensional gel database of human colon carcinoma proteins.</title>
        <authorList>
            <person name="Ji H."/>
            <person name="Reid G.E."/>
            <person name="Moritz R.L."/>
            <person name="Eddes J.S."/>
            <person name="Burgess A.W."/>
            <person name="Simpson R.J."/>
        </authorList>
    </citation>
    <scope>PROTEIN SEQUENCE OF 18-26</scope>
    <source>
        <tissue>Colon carcinoma</tissue>
    </source>
</reference>
<reference key="20">
    <citation type="journal article" date="1995" name="J. Biol. Chem.">
        <title>Calreticulin functions as a molecular chaperone in the biosynthesis of myeloperoxidase.</title>
        <authorList>
            <person name="Nauseef W.M."/>
            <person name="McCormick S.J."/>
            <person name="Clark R.A."/>
        </authorList>
    </citation>
    <scope>FUNCTION</scope>
</reference>
<reference key="21">
    <citation type="journal article" date="1996" name="J. Immunol.">
        <title>Calreticulin binds hYRNA and the 52-kDa polypeptide component of the Ro/SS-A ribonucleoprotein autoantigen.</title>
        <authorList>
            <person name="Cheng S.T."/>
            <person name="Nguyen T.Q."/>
            <person name="Yang Y.S."/>
            <person name="Capra J.D."/>
            <person name="Sontheimer R.D."/>
        </authorList>
    </citation>
    <scope>INTERACTION WITH TRIM21</scope>
</reference>
<reference key="22">
    <citation type="journal article" date="1998" name="Curr. Biol.">
        <title>TAP- and tapasin-dependent HLA-E surface expression correlates with the binding of an MHC class I leader peptide.</title>
        <authorList>
            <person name="Braud V.M."/>
            <person name="Allan D.S."/>
            <person name="Wilson D."/>
            <person name="McMichael A.J."/>
        </authorList>
    </citation>
    <scope>SUBUNIT</scope>
    <scope>INTERACTION WITH HLA-E</scope>
</reference>
<reference key="23">
    <citation type="journal article" date="1998" name="Immunology">
        <title>Calreticulin associates with non-HLA-A,-B class I proteins in the human choriocarcinoma cell lines JEG-3 and BeWo.</title>
        <authorList>
            <person name="Wainwright S.D."/>
            <person name="Simpson K.L."/>
            <person name="Holmes C.H."/>
        </authorList>
    </citation>
    <scope>SUBUNIT</scope>
    <scope>INTERACTION WITH HLA-G</scope>
</reference>
<reference key="24">
    <citation type="journal article" date="1999" name="J. Biol. Chem.">
        <title>Calreticulin is expressed on the cell surface of activated human peripheral blood T lymphocytes in association with major histocompatibility complex class I molecules.</title>
        <authorList>
            <person name="Arosa F.A."/>
            <person name="de Jesus O."/>
            <person name="Porto G."/>
            <person name="Carmo A.M."/>
            <person name="de Sousa M."/>
        </authorList>
    </citation>
    <scope>SUBCELLULAR LOCATION</scope>
</reference>
<reference key="25">
    <citation type="journal article" date="2000" name="J. Immunol.">
        <title>HLA-F is a predominantly empty, intracellular, TAP-associated MHC class Ib protein with a restricted expression pattern.</title>
        <authorList>
            <person name="Wainwright S.D."/>
            <person name="Biro P.A."/>
            <person name="Holmes C.H."/>
        </authorList>
    </citation>
    <scope>SUBUNIT</scope>
    <scope>INTERACTION WITH HLA-F</scope>
</reference>
<reference key="26">
    <citation type="journal article" date="2001" name="J. Cell Biol.">
        <title>Calreticulin is a receptor for nuclear export.</title>
        <authorList>
            <person name="Holaska J.M."/>
            <person name="Black B.E."/>
            <person name="Love D.C."/>
            <person name="Hanover J.A."/>
            <person name="Leszyk J."/>
            <person name="Paschal B.M."/>
        </authorList>
    </citation>
    <scope>FUNCTION</scope>
    <scope>INTERACTION WITH NR3C1</scope>
    <scope>SUBCELLULAR LOCATION</scope>
    <scope>MASS SPECTROMETRY</scope>
</reference>
<reference key="27">
    <citation type="journal article" date="2001" name="Eur. J. Biochem.">
        <title>Human placental calreticulin characterization of domain structure and post-translational modifications.</title>
        <authorList>
            <person name="Hoejrup P."/>
            <person name="Roepstorff P."/>
            <person name="Houen G."/>
        </authorList>
    </citation>
    <scope>PARTIAL PROTEIN SEQUENCE</scope>
    <scope>DISULFIDE BOND</scope>
    <scope>IDENTIFICATION BY MASS SPECTROMETRY</scope>
    <source>
        <tissue>Placenta</tissue>
    </source>
</reference>
<reference key="28">
    <citation type="journal article" date="2009" name="J. Proteome Res.">
        <title>Glycoproteomics analysis of human liver tissue by combination of multiple enzyme digestion and hydrazide chemistry.</title>
        <authorList>
            <person name="Chen R."/>
            <person name="Jiang X."/>
            <person name="Sun D."/>
            <person name="Han G."/>
            <person name="Wang F."/>
            <person name="Ye M."/>
            <person name="Wang L."/>
            <person name="Zou H."/>
        </authorList>
    </citation>
    <scope>GLYCOSYLATION [LARGE SCALE ANALYSIS] AT ASN-344</scope>
    <source>
        <tissue>Liver</tissue>
    </source>
</reference>
<reference key="29">
    <citation type="journal article" date="2009" name="Science">
        <title>Lysine acetylation targets protein complexes and co-regulates major cellular functions.</title>
        <authorList>
            <person name="Choudhary C."/>
            <person name="Kumar C."/>
            <person name="Gnad F."/>
            <person name="Nielsen M.L."/>
            <person name="Rehman M."/>
            <person name="Walther T.C."/>
            <person name="Olsen J.V."/>
            <person name="Mann M."/>
        </authorList>
    </citation>
    <scope>ACETYLATION [LARGE SCALE ANALYSIS] AT LYS-48; LYS-159 AND LYS-209</scope>
    <scope>IDENTIFICATION BY MASS SPECTROMETRY [LARGE SCALE ANALYSIS]</scope>
</reference>
<reference key="30">
    <citation type="journal article" date="2010" name="J. Biol. Chem.">
        <title>Structural basis of cyclophilin B binding by the calnexin/calreticulin P-domain.</title>
        <authorList>
            <person name="Kozlov G."/>
            <person name="Bastos-Aristizabal S."/>
            <person name="Maattanen P."/>
            <person name="Rosenauer A."/>
            <person name="Zheng F."/>
            <person name="Killikelly A."/>
            <person name="Trempe J.F."/>
            <person name="Thomas D.Y."/>
            <person name="Gehring K."/>
        </authorList>
    </citation>
    <scope>INTERACTION WITH PPIB</scope>
</reference>
<reference key="31">
    <citation type="journal article" date="2011" name="BMC Syst. Biol.">
        <title>Initial characterization of the human central proteome.</title>
        <authorList>
            <person name="Burkard T.R."/>
            <person name="Planyavsky M."/>
            <person name="Kaupe I."/>
            <person name="Breitwieser F.P."/>
            <person name="Buerckstuemmer T."/>
            <person name="Bennett K.L."/>
            <person name="Superti-Furga G."/>
            <person name="Colinge J."/>
        </authorList>
    </citation>
    <scope>IDENTIFICATION BY MASS SPECTROMETRY [LARGE SCALE ANALYSIS]</scope>
</reference>
<reference key="32">
    <citation type="journal article" date="2012" name="J. Proteome Res.">
        <title>Resveratrol-induced changes of the human adipocyte secretion profile.</title>
        <authorList>
            <person name="Rosenow A."/>
            <person name="Noben J.P."/>
            <person name="Jocken J."/>
            <person name="Kallendrusch S."/>
            <person name="Fischer-Posovszky P."/>
            <person name="Mariman E.C."/>
            <person name="Renes J."/>
        </authorList>
    </citation>
    <scope>IDENTIFICATION BY MASS SPECTROMETRY [LARGE SCALE ANALYSIS]</scope>
</reference>
<reference key="33">
    <citation type="journal article" date="2013" name="PLoS ONE">
        <title>Structure of the non-catalytic domain of the protein disulfide isomerase-related protein (PDIR) reveals function in protein binding.</title>
        <authorList>
            <person name="Vinaik R."/>
            <person name="Kozlov G."/>
            <person name="Gehring K."/>
        </authorList>
    </citation>
    <scope>INTERACTION WITH PDIA5</scope>
</reference>
<reference key="34">
    <citation type="journal article" date="2014" name="J. Proteomics">
        <title>An enzyme assisted RP-RPLC approach for in-depth analysis of human liver phosphoproteome.</title>
        <authorList>
            <person name="Bian Y."/>
            <person name="Song C."/>
            <person name="Cheng K."/>
            <person name="Dong M."/>
            <person name="Wang F."/>
            <person name="Huang J."/>
            <person name="Sun D."/>
            <person name="Wang L."/>
            <person name="Ye M."/>
            <person name="Zou H."/>
        </authorList>
    </citation>
    <scope>IDENTIFICATION BY MASS SPECTROMETRY [LARGE SCALE ANALYSIS]</scope>
    <source>
        <tissue>Liver</tissue>
    </source>
</reference>
<reference key="35">
    <citation type="journal article" date="2015" name="Proteomics">
        <title>N-terminome analysis of the human mitochondrial proteome.</title>
        <authorList>
            <person name="Vaca Jacome A.S."/>
            <person name="Rabilloud T."/>
            <person name="Schaeffer-Reiss C."/>
            <person name="Rompais M."/>
            <person name="Ayoub D."/>
            <person name="Lane L."/>
            <person name="Bairoch A."/>
            <person name="Van Dorsselaer A."/>
            <person name="Carapito C."/>
        </authorList>
    </citation>
    <scope>CLEAVAGE OF SIGNAL PEPTIDE [LARGE SCALE ANALYSIS] AFTER ALA-17</scope>
    <scope>IDENTIFICATION BY MASS SPECTROMETRY [LARGE SCALE ANALYSIS]</scope>
</reference>
<reference key="36">
    <citation type="journal article" date="2018" name="Cell Res.">
        <title>Landscape of the regulatory elements for lysine 2-hydroxyisobutyrylation pathway.</title>
        <authorList>
            <person name="Huang H."/>
            <person name="Luo Z."/>
            <person name="Qi S."/>
            <person name="Huang J."/>
            <person name="Xu P."/>
            <person name="Wang X."/>
            <person name="Gao L."/>
            <person name="Li F."/>
            <person name="Wang J."/>
            <person name="Zhao W."/>
            <person name="Gu W."/>
            <person name="Chen Z."/>
            <person name="Dai L."/>
            <person name="Dai J."/>
            <person name="Zhao Y."/>
        </authorList>
    </citation>
    <scope>HYDROXYBUTYRYLATION AT LYS-64</scope>
</reference>
<reference key="37">
    <citation type="journal article" date="2018" name="PLoS Genet.">
        <title>Mutation in the intracellular chloride channel CLCC1 associated with autosomal recessive retinitis pigmentosa.</title>
        <authorList>
            <person name="Li L."/>
            <person name="Jiao X."/>
            <person name="D'Atri I."/>
            <person name="Ono F."/>
            <person name="Nelson R."/>
            <person name="Chan C.C."/>
            <person name="Nakaya N."/>
            <person name="Ma Z."/>
            <person name="Ma Y."/>
            <person name="Cai X."/>
            <person name="Zhang L."/>
            <person name="Lin S."/>
            <person name="Hameed A."/>
            <person name="Chioza B.A."/>
            <person name="Hardy H."/>
            <person name="Arno G."/>
            <person name="Hull S."/>
            <person name="Khan M.I."/>
            <person name="Fasham J."/>
            <person name="Harlalka G.V."/>
            <person name="Michaelides M."/>
            <person name="Moore A.T."/>
            <person name="Coban Akdemir Z.H."/>
            <person name="Jhangiani S."/>
            <person name="Lupski J.R."/>
            <person name="Cremers F.P.M."/>
            <person name="Qamar R."/>
            <person name="Salman A."/>
            <person name="Chilton J."/>
            <person name="Self J."/>
            <person name="Ayyagari R."/>
            <person name="Kabir F."/>
            <person name="Naeem M.A."/>
            <person name="Ali M."/>
            <person name="Akram J."/>
            <person name="Sieving P.A."/>
            <person name="Riazuddin S."/>
            <person name="Baple E.L."/>
            <person name="Riazuddin S.A."/>
            <person name="Crosby A.H."/>
            <person name="Hejtmancik J.F."/>
        </authorList>
    </citation>
    <scope>INTERACTION WITH CLCC1</scope>
</reference>
<reference key="38">
    <citation type="journal article" date="2013" name="N. Engl. J. Med.">
        <title>Somatic mutations of calreticulin in myeloproliferative neoplasms.</title>
        <authorList>
            <person name="Klampfl T."/>
            <person name="Gisslinger H."/>
            <person name="Harutyunyan A.S."/>
            <person name="Nivarthi H."/>
            <person name="Rumi E."/>
            <person name="Milosevic J.D."/>
            <person name="Them N.C."/>
            <person name="Berg T."/>
            <person name="Gisslinger B."/>
            <person name="Pietra D."/>
            <person name="Chen D."/>
            <person name="Vladimer G.I."/>
            <person name="Bagienski K."/>
            <person name="Milanesi C."/>
            <person name="Casetti I.C."/>
            <person name="Sant'Antonio E."/>
            <person name="Ferretti V."/>
            <person name="Elena C."/>
            <person name="Schischlik F."/>
            <person name="Cleary C."/>
            <person name="Six M."/>
            <person name="Schalling M."/>
            <person name="Schoenegger A."/>
            <person name="Bock C."/>
            <person name="Malcovati L."/>
            <person name="Pascutto C."/>
            <person name="Superti-Furga G."/>
            <person name="Cazzola M."/>
            <person name="Kralovics R."/>
        </authorList>
    </citation>
    <scope>INVOLVEMENT IN MYELOPROLIFERATIVE NEOPLASMS</scope>
</reference>
<reference key="39">
    <citation type="journal article" date="2013" name="N. Engl. J. Med.">
        <title>Somatic CALR mutations in myeloproliferative neoplasms with nonmutated JAK2.</title>
        <authorList>
            <person name="Nangalia J."/>
            <person name="Massie C.E."/>
            <person name="Baxter E.J."/>
            <person name="Nice F.L."/>
            <person name="Gundem G."/>
            <person name="Wedge D.C."/>
            <person name="Avezov E."/>
            <person name="Li J."/>
            <person name="Kollmann K."/>
            <person name="Kent D.G."/>
            <person name="Aziz A."/>
            <person name="Godfrey A.L."/>
            <person name="Hinton J."/>
            <person name="Martincorena I."/>
            <person name="Van Loo P."/>
            <person name="Jones A.V."/>
            <person name="Guglielmelli P."/>
            <person name="Tarpey P."/>
            <person name="Harding H.P."/>
            <person name="Fitzpatrick J.D."/>
            <person name="Goudie C.T."/>
            <person name="Ortmann C.A."/>
            <person name="Loughran S.J."/>
            <person name="Raine K."/>
            <person name="Jones D.R."/>
            <person name="Butler A.P."/>
            <person name="Teague J.W."/>
            <person name="O'Meara S."/>
            <person name="McLaren S."/>
            <person name="Bianchi M."/>
            <person name="Silber Y."/>
            <person name="Dimitropoulou D."/>
            <person name="Bloxham D."/>
            <person name="Mudie L."/>
            <person name="Maddison M."/>
            <person name="Robinson B."/>
            <person name="Keohane C."/>
            <person name="Maclean C."/>
            <person name="Hill K."/>
            <person name="Orchard K."/>
            <person name="Tauro S."/>
            <person name="Du M.Q."/>
            <person name="Greaves M."/>
            <person name="Bowen D."/>
            <person name="Huntly B.J.P."/>
            <person name="Harrison C.N."/>
            <person name="Cross N.C.P."/>
            <person name="Ron D."/>
            <person name="Vannucchi A.M."/>
            <person name="Papaemmanuil E."/>
            <person name="Campbell P.J."/>
            <person name="Green A.R."/>
        </authorList>
    </citation>
    <scope>INVOLVEMENT IN MYELOPROLIFERATIVE NEOPLASMS</scope>
</reference>
<reference key="40">
    <citation type="journal article" date="2009" name="FEBS J.">
        <title>Structural framework of the GABARAP-calreticulin interface -- implications for substrate binding to endoplasmic reticulum chaperones.</title>
        <authorList>
            <person name="Thielmann Y."/>
            <person name="Weiergraber O.H."/>
            <person name="Mohrluder J."/>
            <person name="Willbold D."/>
        </authorList>
    </citation>
    <scope>X-RAY CRYSTALLOGRAPHY (2.3 ANGSTROMS) OF 195-205 IN COMPLEX WITH GABARAP</scope>
    <scope>INTERACTION WITH GABARAP</scope>
</reference>
<reference evidence="36 37" key="41">
    <citation type="journal article" date="2011" name="PLoS ONE">
        <title>X-ray structure of the human calreticulin globular domain reveals a peptide-binding area and suggests a multi-molecular mechanism.</title>
        <authorList>
            <person name="Chouquet A."/>
            <person name="Paidassi H."/>
            <person name="Ling W.L."/>
            <person name="Frachet P."/>
            <person name="Houen G."/>
            <person name="Arlaud G.J."/>
            <person name="Gaboriaud C."/>
        </authorList>
    </citation>
    <scope>X-RAY CRYSTALLOGRAPHY (1.55 ANGSTROMS) OF 18-368 IN COMPLEX WITH CALCIUM IONS</scope>
    <scope>DISULFIDE BOND</scope>
</reference>
<reference evidence="38" key="42">
    <citation type="journal article" date="2016" name="IUCrJ">
        <title>Structures of parasite calreticulins provide insights into their flexibility and dual carbohydrate/peptide-binding properties.</title>
        <authorList>
            <person name="Moreau C.P."/>
            <person name="Cioci G."/>
            <person name="Iannello M."/>
            <person name="Laffly E."/>
            <person name="Chouquet A."/>
            <person name="Ferreira A."/>
            <person name="Thielens N.M."/>
            <person name="Gaboriaud C."/>
        </authorList>
    </citation>
    <scope>X-RAY CRYSTALLOGRAPHY (2.30 ANGSTROMS) OF 18-204 AND 303-368 OF MUTANT LYS-71 IN COMPLEX WITH CALCIUM</scope>
    <scope>DISULFIDE BOND</scope>
</reference>
<evidence type="ECO:0000250" key="1"/>
<evidence type="ECO:0000250" key="2">
    <source>
        <dbReference type="UniProtKB" id="P14211"/>
    </source>
</evidence>
<evidence type="ECO:0000250" key="3">
    <source>
        <dbReference type="UniProtKB" id="P18418"/>
    </source>
</evidence>
<evidence type="ECO:0000250" key="4">
    <source>
        <dbReference type="UniProtKB" id="P28491"/>
    </source>
</evidence>
<evidence type="ECO:0000250" key="5">
    <source>
        <dbReference type="UniProtKB" id="Q8K3H7"/>
    </source>
</evidence>
<evidence type="ECO:0000256" key="6">
    <source>
        <dbReference type="SAM" id="MobiDB-lite"/>
    </source>
</evidence>
<evidence type="ECO:0000269" key="7">
    <source>
    </source>
</evidence>
<evidence type="ECO:0000269" key="8">
    <source>
    </source>
</evidence>
<evidence type="ECO:0000269" key="9">
    <source>
    </source>
</evidence>
<evidence type="ECO:0000269" key="10">
    <source>
    </source>
</evidence>
<evidence type="ECO:0000269" key="11">
    <source>
    </source>
</evidence>
<evidence type="ECO:0000269" key="12">
    <source>
    </source>
</evidence>
<evidence type="ECO:0000269" key="13">
    <source>
    </source>
</evidence>
<evidence type="ECO:0000269" key="14">
    <source>
    </source>
</evidence>
<evidence type="ECO:0000269" key="15">
    <source>
    </source>
</evidence>
<evidence type="ECO:0000269" key="16">
    <source>
    </source>
</evidence>
<evidence type="ECO:0000269" key="17">
    <source>
    </source>
</evidence>
<evidence type="ECO:0000269" key="18">
    <source>
    </source>
</evidence>
<evidence type="ECO:0000269" key="19">
    <source>
    </source>
</evidence>
<evidence type="ECO:0000269" key="20">
    <source>
    </source>
</evidence>
<evidence type="ECO:0000269" key="21">
    <source>
    </source>
</evidence>
<evidence type="ECO:0000269" key="22">
    <source>
    </source>
</evidence>
<evidence type="ECO:0000269" key="23">
    <source>
    </source>
</evidence>
<evidence type="ECO:0000269" key="24">
    <source>
    </source>
</evidence>
<evidence type="ECO:0000269" key="25">
    <source>
    </source>
</evidence>
<evidence type="ECO:0000269" key="26">
    <source>
    </source>
</evidence>
<evidence type="ECO:0000269" key="27">
    <source>
    </source>
</evidence>
<evidence type="ECO:0000269" key="28">
    <source>
    </source>
</evidence>
<evidence type="ECO:0000269" key="29">
    <source>
    </source>
</evidence>
<evidence type="ECO:0000269" key="30">
    <source>
    </source>
</evidence>
<evidence type="ECO:0000269" key="31">
    <source>
    </source>
</evidence>
<evidence type="ECO:0000303" key="32">
    <source>
    </source>
</evidence>
<evidence type="ECO:0000305" key="33"/>
<evidence type="ECO:0000305" key="34">
    <source>
    </source>
</evidence>
<evidence type="ECO:0000312" key="35">
    <source>
        <dbReference type="HGNC" id="HGNC:1455"/>
    </source>
</evidence>
<evidence type="ECO:0007744" key="36">
    <source>
        <dbReference type="PDB" id="3POS"/>
    </source>
</evidence>
<evidence type="ECO:0007744" key="37">
    <source>
        <dbReference type="PDB" id="3POW"/>
    </source>
</evidence>
<evidence type="ECO:0007744" key="38">
    <source>
        <dbReference type="PDB" id="5LK5"/>
    </source>
</evidence>
<evidence type="ECO:0007744" key="39">
    <source>
    </source>
</evidence>
<evidence type="ECO:0007744" key="40">
    <source>
    </source>
</evidence>
<evidence type="ECO:0007829" key="41">
    <source>
        <dbReference type="PDB" id="3DOW"/>
    </source>
</evidence>
<evidence type="ECO:0007829" key="42">
    <source>
        <dbReference type="PDB" id="3POW"/>
    </source>
</evidence>
<evidence type="ECO:0007829" key="43">
    <source>
        <dbReference type="PDB" id="5LK5"/>
    </source>
</evidence>
<evidence type="ECO:0007829" key="44">
    <source>
        <dbReference type="PDB" id="5V90"/>
    </source>
</evidence>
<gene>
    <name evidence="35" type="primary">CALR</name>
    <name type="synonym">CRTC</name>
</gene>
<protein>
    <recommendedName>
        <fullName evidence="32">Calreticulin</fullName>
    </recommendedName>
    <alternativeName>
        <fullName>CRP55</fullName>
    </alternativeName>
    <alternativeName>
        <fullName>Calregulin</fullName>
    </alternativeName>
    <alternativeName>
        <fullName>Endoplasmic reticulum resident protein 60</fullName>
        <shortName>ERp60</shortName>
    </alternativeName>
    <alternativeName>
        <fullName>HACBP</fullName>
    </alternativeName>
    <alternativeName>
        <fullName>grp60</fullName>
    </alternativeName>
</protein>
<keyword id="KW-0002">3D-structure</keyword>
<keyword id="KW-0007">Acetylation</keyword>
<keyword id="KW-0106">Calcium</keyword>
<keyword id="KW-0143">Chaperone</keyword>
<keyword id="KW-0963">Cytoplasm</keyword>
<keyword id="KW-0968">Cytoplasmic vesicle</keyword>
<keyword id="KW-0903">Direct protein sequencing</keyword>
<keyword id="KW-1015">Disulfide bond</keyword>
<keyword id="KW-0256">Endoplasmic reticulum</keyword>
<keyword id="KW-0272">Extracellular matrix</keyword>
<keyword id="KW-0325">Glycoprotein</keyword>
<keyword id="KW-0379">Hydroxylation</keyword>
<keyword id="KW-0430">Lectin</keyword>
<keyword id="KW-0458">Lysosome</keyword>
<keyword id="KW-0479">Metal-binding</keyword>
<keyword id="KW-1267">Proteomics identification</keyword>
<keyword id="KW-1185">Reference proteome</keyword>
<keyword id="KW-0677">Repeat</keyword>
<keyword id="KW-0703">Sarcoplasmic reticulum</keyword>
<keyword id="KW-0964">Secreted</keyword>
<keyword id="KW-0732">Signal</keyword>
<keyword id="KW-0862">Zinc</keyword>
<feature type="signal peptide" evidence="11 12 18 24 25 27 29 40">
    <location>
        <begin position="1"/>
        <end position="17"/>
    </location>
</feature>
<feature type="chain" id="PRO_0000004173" description="Calreticulin">
    <location>
        <begin position="18"/>
        <end position="417"/>
    </location>
</feature>
<feature type="repeat" description="1-1">
    <location>
        <begin position="191"/>
        <end position="202"/>
    </location>
</feature>
<feature type="repeat" description="1-2">
    <location>
        <begin position="210"/>
        <end position="221"/>
    </location>
</feature>
<feature type="repeat" description="1-3">
    <location>
        <begin position="227"/>
        <end position="238"/>
    </location>
</feature>
<feature type="repeat" description="1-4">
    <location>
        <begin position="244"/>
        <end position="255"/>
    </location>
</feature>
<feature type="repeat" description="2-1">
    <location>
        <begin position="259"/>
        <end position="269"/>
    </location>
</feature>
<feature type="repeat" description="2-2">
    <location>
        <begin position="273"/>
        <end position="283"/>
    </location>
</feature>
<feature type="repeat" description="2-3">
    <location>
        <begin position="287"/>
        <end position="297"/>
    </location>
</feature>
<feature type="region of interest" description="N-domain">
    <location>
        <begin position="18"/>
        <end position="197"/>
    </location>
</feature>
<feature type="region of interest" description="4 X approximate repeats">
    <location>
        <begin position="191"/>
        <end position="255"/>
    </location>
</feature>
<feature type="region of interest" description="Disordered" evidence="6">
    <location>
        <begin position="193"/>
        <end position="278"/>
    </location>
</feature>
<feature type="region of interest" description="P-domain">
    <location>
        <begin position="198"/>
        <end position="308"/>
    </location>
</feature>
<feature type="region of interest" description="Interaction with PPIB" evidence="1">
    <location>
        <begin position="237"/>
        <end position="270"/>
    </location>
</feature>
<feature type="region of interest" description="3 X approximate repeats">
    <location>
        <begin position="259"/>
        <end position="297"/>
    </location>
</feature>
<feature type="region of interest" description="C-domain">
    <location>
        <begin position="309"/>
        <end position="417"/>
    </location>
</feature>
<feature type="region of interest" description="Disordered" evidence="6">
    <location>
        <begin position="350"/>
        <end position="417"/>
    </location>
</feature>
<feature type="short sequence motif" description="Prevents secretion from ER">
    <location>
        <begin position="414"/>
        <end position="417"/>
    </location>
</feature>
<feature type="compositionally biased region" description="Basic and acidic residues" evidence="6">
    <location>
        <begin position="207"/>
        <end position="251"/>
    </location>
</feature>
<feature type="compositionally biased region" description="Acidic residues" evidence="6">
    <location>
        <begin position="252"/>
        <end position="261"/>
    </location>
</feature>
<feature type="compositionally biased region" description="Basic and acidic residues" evidence="6">
    <location>
        <begin position="352"/>
        <end position="379"/>
    </location>
</feature>
<feature type="compositionally biased region" description="Acidic residues" evidence="6">
    <location>
        <begin position="380"/>
        <end position="409"/>
    </location>
</feature>
<feature type="binding site" evidence="16 21 36 37 38">
    <location>
        <position position="26"/>
    </location>
    <ligand>
        <name>Ca(2+)</name>
        <dbReference type="ChEBI" id="CHEBI:29108"/>
    </ligand>
</feature>
<feature type="binding site" evidence="16 21 36 37 38">
    <location>
        <position position="62"/>
    </location>
    <ligand>
        <name>Ca(2+)</name>
        <dbReference type="ChEBI" id="CHEBI:29108"/>
    </ligand>
</feature>
<feature type="binding site" evidence="16 21 36 37 38">
    <location>
        <position position="64"/>
    </location>
    <ligand>
        <name>Ca(2+)</name>
        <dbReference type="ChEBI" id="CHEBI:29108"/>
    </ligand>
</feature>
<feature type="binding site" evidence="2">
    <location>
        <position position="109"/>
    </location>
    <ligand>
        <name>an alpha-D-glucoside</name>
        <dbReference type="ChEBI" id="CHEBI:22390"/>
    </ligand>
</feature>
<feature type="binding site" evidence="2">
    <location>
        <position position="111"/>
    </location>
    <ligand>
        <name>an alpha-D-glucoside</name>
        <dbReference type="ChEBI" id="CHEBI:22390"/>
    </ligand>
</feature>
<feature type="binding site" evidence="2">
    <location>
        <position position="128"/>
    </location>
    <ligand>
        <name>an alpha-D-glucoside</name>
        <dbReference type="ChEBI" id="CHEBI:22390"/>
    </ligand>
</feature>
<feature type="binding site" evidence="2">
    <location>
        <position position="135"/>
    </location>
    <ligand>
        <name>an alpha-D-glucoside</name>
        <dbReference type="ChEBI" id="CHEBI:22390"/>
    </ligand>
</feature>
<feature type="binding site" evidence="2">
    <location>
        <position position="317"/>
    </location>
    <ligand>
        <name>an alpha-D-glucoside</name>
        <dbReference type="ChEBI" id="CHEBI:22390"/>
    </ligand>
</feature>
<feature type="binding site" evidence="16 21 36 37 38">
    <location>
        <position position="328"/>
    </location>
    <ligand>
        <name>Ca(2+)</name>
        <dbReference type="ChEBI" id="CHEBI:29108"/>
    </ligand>
</feature>
<feature type="modified residue" description="N6-acetyllysine" evidence="39">
    <location>
        <position position="48"/>
    </location>
</feature>
<feature type="modified residue" description="N6-(2-hydroxyisobutyryl)lysine" evidence="22">
    <location>
        <position position="64"/>
    </location>
</feature>
<feature type="modified residue" description="N6-acetyllysine" evidence="39">
    <location>
        <position position="159"/>
    </location>
</feature>
<feature type="modified residue" description="N6-acetyllysine" evidence="39">
    <location>
        <position position="209"/>
    </location>
</feature>
<feature type="glycosylation site" description="N-linked (GlcNAc...) asparagine" evidence="14">
    <location>
        <position position="344"/>
    </location>
</feature>
<feature type="disulfide bond" evidence="10 16 21 36 37 38">
    <location>
        <begin position="105"/>
        <end position="137"/>
    </location>
</feature>
<feature type="strand" evidence="42">
    <location>
        <begin position="20"/>
        <end position="25"/>
    </location>
</feature>
<feature type="helix" evidence="42">
    <location>
        <begin position="30"/>
        <end position="35"/>
    </location>
</feature>
<feature type="strand" evidence="42">
    <location>
        <begin position="37"/>
        <end position="39"/>
    </location>
</feature>
<feature type="strand" evidence="42">
    <location>
        <begin position="42"/>
        <end position="44"/>
    </location>
</feature>
<feature type="strand" evidence="42">
    <location>
        <begin position="49"/>
        <end position="52"/>
    </location>
</feature>
<feature type="turn" evidence="42">
    <location>
        <begin position="60"/>
        <end position="63"/>
    </location>
</feature>
<feature type="strand" evidence="42">
    <location>
        <begin position="65"/>
        <end position="68"/>
    </location>
</feature>
<feature type="strand" evidence="42">
    <location>
        <begin position="70"/>
        <end position="84"/>
    </location>
</feature>
<feature type="strand" evidence="42">
    <location>
        <begin position="91"/>
        <end position="98"/>
    </location>
</feature>
<feature type="strand" evidence="42">
    <location>
        <begin position="104"/>
        <end position="107"/>
    </location>
</feature>
<feature type="strand" evidence="42">
    <location>
        <begin position="110"/>
        <end position="113"/>
    </location>
</feature>
<feature type="helix" evidence="42">
    <location>
        <begin position="119"/>
        <end position="121"/>
    </location>
</feature>
<feature type="strand" evidence="42">
    <location>
        <begin position="129"/>
        <end position="138"/>
    </location>
</feature>
<feature type="strand" evidence="42">
    <location>
        <begin position="142"/>
        <end position="150"/>
    </location>
</feature>
<feature type="strand" evidence="42">
    <location>
        <begin position="153"/>
        <end position="156"/>
    </location>
</feature>
<feature type="strand" evidence="42">
    <location>
        <begin position="166"/>
        <end position="176"/>
    </location>
</feature>
<feature type="strand" evidence="42">
    <location>
        <begin position="180"/>
        <end position="186"/>
    </location>
</feature>
<feature type="strand" evidence="42">
    <location>
        <begin position="189"/>
        <end position="195"/>
    </location>
</feature>
<feature type="helix" evidence="42">
    <location>
        <begin position="196"/>
        <end position="199"/>
    </location>
</feature>
<feature type="strand" evidence="41">
    <location>
        <begin position="201"/>
        <end position="203"/>
    </location>
</feature>
<feature type="turn" evidence="44">
    <location>
        <begin position="255"/>
        <end position="257"/>
    </location>
</feature>
<feature type="turn" evidence="43">
    <location>
        <begin position="303"/>
        <end position="306"/>
    </location>
</feature>
<feature type="strand" evidence="42">
    <location>
        <begin position="311"/>
        <end position="322"/>
    </location>
</feature>
<feature type="strand" evidence="42">
    <location>
        <begin position="326"/>
        <end position="334"/>
    </location>
</feature>
<feature type="helix" evidence="42">
    <location>
        <begin position="336"/>
        <end position="345"/>
    </location>
</feature>
<feature type="helix" evidence="42">
    <location>
        <begin position="347"/>
        <end position="366"/>
    </location>
</feature>
<name>CALR_HUMAN</name>
<sequence>MLLSVPLLLGLLGLAVAEPAVYFKEQFLDGDGWTSRWIESKHKSDFGKFVLSSGKFYGDEEKDKGLQTSQDARFYALSASFEPFSNKGQTLVVQFTVKHEQNIDCGGGYVKLFPNSLDQTDMHGDSEYNIMFGPDICGPGTKKVHVIFNYKGKNVLINKDIRCKDDEFTHLYTLIVRPDNTYEVKIDNSQVESGSLEDDWDFLPPKKIKDPDASKPEDWDERAKIDDPTDSKPEDWDKPEHIPDPDAKKPEDWDEEMDGEWEPPVIQNPEYKGEWKPRQIDNPDYKGTWIHPEIDNPEYSPDPSIYAYDNFGVLGLDLWQVKSGTIFDNFLITNDEAYAEEFGNETWGVTKAAEKQMKDKQDEEQRLKEEEEDKKRKEEEEAEDKEDDEDKDEDEEDEEDKEEDEEEDVPGQAKDEL</sequence>
<comment type="function">
    <text evidence="4 5 9 26">Calcium-binding chaperone that promotes folding, oligomeric assembly and quality control in the endoplasmic reticulum (ER) via the calreticulin/calnexin cycle. This lectin interacts transiently with almost all of the monoglucosylated glycoproteins that are synthesized in the ER (PubMed:7876246). Interacts with the DNA-binding domain of NR3C1 and mediates its nuclear export (PubMed:11149926). Involved in maternal gene expression regulation. May participate in oocyte maturation via the regulation of calcium homeostasis (By similarity). Present in the cortical granules of non-activated oocytes, is exocytosed during the cortical reaction in response to oocyte activation and might participate in the block to polyspermy (By similarity).</text>
</comment>
<comment type="subunit">
    <text evidence="2 3 8 9 13 15 17 23 28 30 31">Monomer. Component of an EIF2 complex at least composed of CELF1/CUGBP1, CALR, CALR3, EIF2S1, EIF2S2, HSP90B1 and HSPA5. Interacts with PDIA3/ERp57 and SPACA9 (By similarity). Interacts with TRIM21 (PubMed:8666824). Interacts with NR3C1 (PubMed:11149926). Interacts with PPIB (PubMed:20801878). Interacts (via P-domain) with PDIA5 (PubMed:23614004). Interacts with GABARAP (PubMed:19154346). Interacts with HLA-E-B2M and HLA-G-B2M complexes (PubMed:9427624, PubMed:9640257). Interacts with HLA-F (PubMed:10605026). Interacts with CLCC1 (PubMed:30157172).</text>
</comment>
<comment type="interaction">
    <interactant intactId="EBI-1049597">
        <id>P27797</id>
    </interactant>
    <interactant intactId="EBI-77613">
        <id>P05067</id>
        <label>APP</label>
    </interactant>
    <organismsDiffer>false</organismsDiffer>
    <experiments>5</experiments>
</comment>
<comment type="interaction">
    <interactant intactId="EBI-1049597">
        <id>P27797</id>
    </interactant>
    <interactant intactId="EBI-13062134">
        <id>Q8N1W1-4</id>
        <label>ARHGEF28</label>
    </interactant>
    <organismsDiffer>false</organismsDiffer>
    <experiments>3</experiments>
</comment>
<comment type="interaction">
    <interactant intactId="EBI-1049597">
        <id>P27797</id>
    </interactant>
    <interactant intactId="EBI-747505">
        <id>Q8TAB5</id>
        <label>C1orf216</label>
    </interactant>
    <organismsDiffer>false</organismsDiffer>
    <experiments>3</experiments>
</comment>
<comment type="interaction">
    <interactant intactId="EBI-1049597">
        <id>P27797</id>
    </interactant>
    <interactant intactId="EBI-10176008">
        <id>O94983-5</id>
        <label>CAMTA2</label>
    </interactant>
    <organismsDiffer>false</organismsDiffer>
    <experiments>3</experiments>
</comment>
<comment type="interaction">
    <interactant intactId="EBI-1049597">
        <id>P27797</id>
    </interactant>
    <interactant intactId="EBI-743073">
        <id>O75175</id>
        <label>CNOT3</label>
    </interactant>
    <organismsDiffer>false</organismsDiffer>
    <experiments>3</experiments>
</comment>
<comment type="interaction">
    <interactant intactId="EBI-1049597">
        <id>P27797</id>
    </interactant>
    <interactant intactId="EBI-21670927">
        <id>Q6UXH1-2</id>
        <label>CRELD2</label>
    </interactant>
    <organismsDiffer>false</organismsDiffer>
    <experiments>3</experiments>
</comment>
<comment type="interaction">
    <interactant intactId="EBI-1049597">
        <id>P27797</id>
    </interactant>
    <interactant intactId="EBI-20894690">
        <id>P49184</id>
        <label>DNASE1L1</label>
    </interactant>
    <organismsDiffer>false</organismsDiffer>
    <experiments>3</experiments>
</comment>
<comment type="interaction">
    <interactant intactId="EBI-1049597">
        <id>P27797</id>
    </interactant>
    <interactant intactId="EBI-10262896">
        <id>Q8IY82</id>
        <label>DRC7</label>
    </interactant>
    <organismsDiffer>false</organismsDiffer>
    <experiments>3</experiments>
</comment>
<comment type="interaction">
    <interactant intactId="EBI-1049597">
        <id>P27797</id>
    </interactant>
    <interactant intactId="EBI-3924130">
        <id>Q99944</id>
        <label>EGFL8</label>
    </interactant>
    <organismsDiffer>false</organismsDiffer>
    <experiments>3</experiments>
</comment>
<comment type="interaction">
    <interactant intactId="EBI-1049597">
        <id>P27797</id>
    </interactant>
    <interactant intactId="EBI-1171184">
        <id>P16422</id>
        <label>EPCAM</label>
    </interactant>
    <organismsDiffer>false</organismsDiffer>
    <experiments>3</experiments>
</comment>
<comment type="interaction">
    <interactant intactId="EBI-1049597">
        <id>P27797</id>
    </interactant>
    <interactant intactId="EBI-10314666">
        <id>Q9NVM1</id>
        <label>EVA1B</label>
    </interactant>
    <organismsDiffer>false</organismsDiffer>
    <experiments>3</experiments>
</comment>
<comment type="interaction">
    <interactant intactId="EBI-1049597">
        <id>P27797</id>
    </interactant>
    <interactant intactId="EBI-21647872">
        <id>Q96GK7</id>
        <label>FAHD2A</label>
    </interactant>
    <organismsDiffer>false</organismsDiffer>
    <experiments>3</experiments>
</comment>
<comment type="interaction">
    <interactant intactId="EBI-1049597">
        <id>P27797</id>
    </interactant>
    <interactant intactId="EBI-9090702">
        <id>Q10981</id>
        <label>FUT2</label>
    </interactant>
    <organismsDiffer>false</organismsDiffer>
    <experiments>3</experiments>
</comment>
<comment type="interaction">
    <interactant intactId="EBI-1049597">
        <id>P27797</id>
    </interactant>
    <interactant intactId="EBI-712001">
        <id>O95166</id>
        <label>GABARAP</label>
    </interactant>
    <organismsDiffer>false</organismsDiffer>
    <experiments>4</experiments>
</comment>
<comment type="interaction">
    <interactant intactId="EBI-1049597">
        <id>P27797</id>
    </interactant>
    <interactant intactId="EBI-750433">
        <id>P36382</id>
        <label>GJA5</label>
    </interactant>
    <organismsDiffer>false</organismsDiffer>
    <experiments>3</experiments>
</comment>
<comment type="interaction">
    <interactant intactId="EBI-1049597">
        <id>P27797</id>
    </interactant>
    <interactant intactId="EBI-715087">
        <id>P09471</id>
        <label>GNAO1</label>
    </interactant>
    <organismsDiffer>false</organismsDiffer>
    <experiments>3</experiments>
</comment>
<comment type="interaction">
    <interactant intactId="EBI-1049597">
        <id>P27797</id>
    </interactant>
    <interactant intactId="EBI-19954058">
        <id>O15499</id>
        <label>GSC2</label>
    </interactant>
    <organismsDiffer>false</organismsDiffer>
    <experiments>3</experiments>
</comment>
<comment type="interaction">
    <interactant intactId="EBI-1049597">
        <id>P27797</id>
    </interactant>
    <interactant intactId="EBI-3910269">
        <id>P79483</id>
        <label>HLA-DRB3</label>
    </interactant>
    <organismsDiffer>false</organismsDiffer>
    <experiments>3</experiments>
</comment>
<comment type="interaction">
    <interactant intactId="EBI-1049597">
        <id>P27797</id>
    </interactant>
    <interactant intactId="EBI-17426018">
        <id>P14060</id>
        <label>HSD3B1</label>
    </interactant>
    <organismsDiffer>false</organismsDiffer>
    <experiments>3</experiments>
</comment>
<comment type="interaction">
    <interactant intactId="EBI-1049597">
        <id>P27797</id>
    </interactant>
    <interactant intactId="EBI-352682">
        <id>P04792</id>
        <label>HSPB1</label>
    </interactant>
    <organismsDiffer>false</organismsDiffer>
    <experiments>2</experiments>
</comment>
<comment type="interaction">
    <interactant intactId="EBI-1049597">
        <id>P27797</id>
    </interactant>
    <interactant intactId="EBI-10975491">
        <id>Q7Z6Z7-2</id>
        <label>HUWE1</label>
    </interactant>
    <organismsDiffer>false</organismsDiffer>
    <experiments>3</experiments>
</comment>
<comment type="interaction">
    <interactant intactId="EBI-1049597">
        <id>P27797</id>
    </interactant>
    <interactant intactId="EBI-715695">
        <id>O75874</id>
        <label>IDH1</label>
    </interactant>
    <organismsDiffer>false</organismsDiffer>
    <experiments>3</experiments>
</comment>
<comment type="interaction">
    <interactant intactId="EBI-1049597">
        <id>P27797</id>
    </interactant>
    <interactant intactId="EBI-2557660">
        <id>Q9ULR0</id>
        <label>ISY1</label>
    </interactant>
    <organismsDiffer>false</organismsDiffer>
    <experiments>3</experiments>
</comment>
<comment type="interaction">
    <interactant intactId="EBI-1049597">
        <id>P27797</id>
    </interactant>
    <interactant intactId="EBI-10171456">
        <id>A0JP07</id>
        <label>KIAA1683</label>
    </interactant>
    <organismsDiffer>false</organismsDiffer>
    <experiments>3</experiments>
</comment>
<comment type="interaction">
    <interactant intactId="EBI-1049597">
        <id>P27797</id>
    </interactant>
    <interactant intactId="EBI-9018187">
        <id>P26715</id>
        <label>KLRC1</label>
    </interactant>
    <organismsDiffer>false</organismsDiffer>
    <experiments>3</experiments>
</comment>
<comment type="interaction">
    <interactant intactId="EBI-1049597">
        <id>P27797</id>
    </interactant>
    <interactant intactId="EBI-11750531">
        <id>Q6P5S2</id>
        <label>LEG1</label>
    </interactant>
    <organismsDiffer>false</organismsDiffer>
    <experiments>3</experiments>
</comment>
<comment type="interaction">
    <interactant intactId="EBI-1049597">
        <id>P27797</id>
    </interactant>
    <interactant intactId="EBI-1048875">
        <id>P09382</id>
        <label>LGALS1</label>
    </interactant>
    <organismsDiffer>false</organismsDiffer>
    <experiments>3</experiments>
</comment>
<comment type="interaction">
    <interactant intactId="EBI-1049597">
        <id>P27797</id>
    </interactant>
    <interactant intactId="EBI-12069522">
        <id>O00214-2</id>
        <label>LGALS8</label>
    </interactant>
    <organismsDiffer>false</organismsDiffer>
    <experiments>3</experiments>
</comment>
<comment type="interaction">
    <interactant intactId="EBI-1049597">
        <id>P27797</id>
    </interactant>
    <interactant intactId="EBI-5650739">
        <id>P43356</id>
        <label>MAGEA2B</label>
    </interactant>
    <organismsDiffer>false</organismsDiffer>
    <experiments>3</experiments>
</comment>
<comment type="interaction">
    <interactant intactId="EBI-1049597">
        <id>P27797</id>
    </interactant>
    <interactant intactId="EBI-995373">
        <id>Q7Z434</id>
        <label>MAVS</label>
    </interactant>
    <organismsDiffer>false</organismsDiffer>
    <experiments>3</experiments>
</comment>
<comment type="interaction">
    <interactant intactId="EBI-1049597">
        <id>P27797</id>
    </interactant>
    <interactant intactId="EBI-5325353">
        <id>P11226</id>
        <label>MBL2</label>
    </interactant>
    <organismsDiffer>false</organismsDiffer>
    <experiments>6</experiments>
</comment>
<comment type="interaction">
    <interactant intactId="EBI-1049597">
        <id>P27797</id>
    </interactant>
    <interactant intactId="EBI-744790">
        <id>Q8NCR3</id>
        <label>MFI</label>
    </interactant>
    <organismsDiffer>false</organismsDiffer>
    <experiments>3</experiments>
</comment>
<comment type="interaction">
    <interactant intactId="EBI-1049597">
        <id>P27797</id>
    </interactant>
    <interactant intactId="EBI-25834188">
        <id>Q8TB02</id>
        <label>MGC39372</label>
    </interactant>
    <organismsDiffer>false</organismsDiffer>
    <experiments>3</experiments>
</comment>
<comment type="interaction">
    <interactant intactId="EBI-1049597">
        <id>P27797</id>
    </interactant>
    <interactant intactId="EBI-7825413">
        <id>Q96EY8</id>
        <label>MMAB</label>
    </interactant>
    <organismsDiffer>false</organismsDiffer>
    <experiments>3</experiments>
</comment>
<comment type="interaction">
    <interactant intactId="EBI-1049597">
        <id>P27797</id>
    </interactant>
    <interactant intactId="EBI-2556173">
        <id>P05164</id>
        <label>MPO</label>
    </interactant>
    <organismsDiffer>false</organismsDiffer>
    <experiments>3</experiments>
</comment>
<comment type="interaction">
    <interactant intactId="EBI-1049597">
        <id>P27797</id>
    </interactant>
    <interactant intactId="EBI-1188238">
        <id>P48039</id>
        <label>MTNR1A</label>
    </interactant>
    <organismsDiffer>false</organismsDiffer>
    <experiments>3</experiments>
</comment>
<comment type="interaction">
    <interactant intactId="EBI-1049597">
        <id>P27797</id>
    </interactant>
    <interactant intactId="EBI-9088235">
        <id>A2RUH7</id>
        <label>MYBPHL</label>
    </interactant>
    <organismsDiffer>false</organismsDiffer>
    <experiments>3</experiments>
</comment>
<comment type="interaction">
    <interactant intactId="EBI-1049597">
        <id>P27797</id>
    </interactant>
    <interactant intactId="EBI-3446748">
        <id>Q9NPC7</id>
        <label>MYNN</label>
    </interactant>
    <organismsDiffer>false</organismsDiffer>
    <experiments>3</experiments>
</comment>
<comment type="interaction">
    <interactant intactId="EBI-1049597">
        <id>P27797</id>
    </interactant>
    <interactant intactId="EBI-11750983">
        <id>Q9HC98-4</id>
        <label>NEK6</label>
    </interactant>
    <organismsDiffer>false</organismsDiffer>
    <experiments>3</experiments>
</comment>
<comment type="interaction">
    <interactant intactId="EBI-1049597">
        <id>P27797</id>
    </interactant>
    <interactant intactId="EBI-12305293">
        <id>Q8NCF5-2</id>
        <label>NFATC2IP</label>
    </interactant>
    <organismsDiffer>false</organismsDiffer>
    <experiments>3</experiments>
</comment>
<comment type="interaction">
    <interactant intactId="EBI-1049597">
        <id>P27797</id>
    </interactant>
    <interactant intactId="EBI-6253230">
        <id>Q96P20</id>
        <label>NLRP3</label>
    </interactant>
    <organismsDiffer>false</organismsDiffer>
    <experiments>3</experiments>
</comment>
<comment type="interaction">
    <interactant intactId="EBI-1049597">
        <id>P27797</id>
    </interactant>
    <interactant intactId="EBI-25834085">
        <id>Q8N323</id>
        <label>NXPE1</label>
    </interactant>
    <organismsDiffer>false</organismsDiffer>
    <experiments>3</experiments>
</comment>
<comment type="interaction">
    <interactant intactId="EBI-1049597">
        <id>P27797</id>
    </interactant>
    <interactant intactId="EBI-9091052">
        <id>Q6P4D5-2</id>
        <label>PABIR3</label>
    </interactant>
    <organismsDiffer>false</organismsDiffer>
    <experiments>3</experiments>
</comment>
<comment type="interaction">
    <interactant intactId="EBI-1049597">
        <id>P27797</id>
    </interactant>
    <interactant intactId="EBI-473160">
        <id>Q8N2W9</id>
        <label>PIAS4</label>
    </interactant>
    <organismsDiffer>false</organismsDiffer>
    <experiments>3</experiments>
</comment>
<comment type="interaction">
    <interactant intactId="EBI-1049597">
        <id>P27797</id>
    </interactant>
    <interactant intactId="EBI-2557132">
        <id>Q8NBT0</id>
        <label>POC1A</label>
    </interactant>
    <organismsDiffer>false</organismsDiffer>
    <experiments>3</experiments>
</comment>
<comment type="interaction">
    <interactant intactId="EBI-1049597">
        <id>P27797</id>
    </interactant>
    <interactant intactId="EBI-2931238">
        <id>O14829</id>
        <label>PPEF1</label>
    </interactant>
    <organismsDiffer>false</organismsDiffer>
    <experiments>3</experiments>
</comment>
<comment type="interaction">
    <interactant intactId="EBI-1049597">
        <id>P27797</id>
    </interactant>
    <interactant intactId="EBI-2860740">
        <id>Q96QH2</id>
        <label>PRAM1</label>
    </interactant>
    <organismsDiffer>false</organismsDiffer>
    <experiments>3</experiments>
</comment>
<comment type="interaction">
    <interactant intactId="EBI-1049597">
        <id>P27797</id>
    </interactant>
    <interactant intactId="EBI-709652">
        <id>Q9Y617</id>
        <label>PSAT1</label>
    </interactant>
    <organismsDiffer>false</organismsDiffer>
    <experiments>3</experiments>
</comment>
<comment type="interaction">
    <interactant intactId="EBI-1049597">
        <id>P27797</id>
    </interactant>
    <interactant intactId="EBI-743997">
        <id>P43686</id>
        <label>PSMC4</label>
    </interactant>
    <organismsDiffer>false</organismsDiffer>
    <experiments>3</experiments>
</comment>
<comment type="interaction">
    <interactant intactId="EBI-1049597">
        <id>P27797</id>
    </interactant>
    <interactant intactId="EBI-357648">
        <id>Q13200</id>
        <label>PSMD2</label>
    </interactant>
    <organismsDiffer>false</organismsDiffer>
    <experiments>3</experiments>
</comment>
<comment type="interaction">
    <interactant intactId="EBI-1049597">
        <id>P27797</id>
    </interactant>
    <interactant intactId="EBI-3397474">
        <id>Q9Y3Y4</id>
        <label>PYGO1</label>
    </interactant>
    <organismsDiffer>false</organismsDiffer>
    <experiments>3</experiments>
</comment>
<comment type="interaction">
    <interactant intactId="EBI-1049597">
        <id>P27797</id>
    </interactant>
    <interactant intactId="EBI-725987">
        <id>Q13636</id>
        <label>RAB31</label>
    </interactant>
    <organismsDiffer>false</organismsDiffer>
    <experiments>3</experiments>
</comment>
<comment type="interaction">
    <interactant intactId="EBI-1049597">
        <id>P27797</id>
    </interactant>
    <interactant intactId="EBI-4287022">
        <id>Q96E17</id>
        <label>RAB3C</label>
    </interactant>
    <organismsDiffer>false</organismsDiffer>
    <experiments>3</experiments>
</comment>
<comment type="interaction">
    <interactant intactId="EBI-1049597">
        <id>P27797</id>
    </interactant>
    <interactant intactId="EBI-358143">
        <id>P61224</id>
        <label>RAP1B</label>
    </interactant>
    <organismsDiffer>false</organismsDiffer>
    <experiments>3</experiments>
</comment>
<comment type="interaction">
    <interactant intactId="EBI-1049597">
        <id>P27797</id>
    </interactant>
    <interactant intactId="EBI-960081">
        <id>P50749</id>
        <label>RASSF2</label>
    </interactant>
    <organismsDiffer>false</organismsDiffer>
    <experiments>3</experiments>
</comment>
<comment type="interaction">
    <interactant intactId="EBI-1049597">
        <id>P27797</id>
    </interactant>
    <interactant intactId="EBI-740272">
        <id>Q96I25</id>
        <label>RBM17</label>
    </interactant>
    <organismsDiffer>false</organismsDiffer>
    <experiments>3</experiments>
</comment>
<comment type="interaction">
    <interactant intactId="EBI-1049597">
        <id>P27797</id>
    </interactant>
    <interactant intactId="EBI-714003">
        <id>P52756</id>
        <label>RBM5</label>
    </interactant>
    <organismsDiffer>false</organismsDiffer>
    <experiments>3</experiments>
</comment>
<comment type="interaction">
    <interactant intactId="EBI-1049597">
        <id>P27797</id>
    </interactant>
    <interactant intactId="EBI-744081">
        <id>Q96EQ0</id>
        <label>SGTB</label>
    </interactant>
    <organismsDiffer>false</organismsDiffer>
    <experiments>3</experiments>
</comment>
<comment type="interaction">
    <interactant intactId="EBI-1049597">
        <id>P27797</id>
    </interactant>
    <interactant intactId="EBI-359174">
        <id>Q02978</id>
        <label>SLC25A11</label>
    </interactant>
    <organismsDiffer>false</organismsDiffer>
    <experiments>3</experiments>
</comment>
<comment type="interaction">
    <interactant intactId="EBI-1049597">
        <id>P27797</id>
    </interactant>
    <interactant intactId="EBI-358419">
        <id>Q12824</id>
        <label>SMARCB1</label>
    </interactant>
    <organismsDiffer>false</organismsDiffer>
    <experiments>5</experiments>
</comment>
<comment type="interaction">
    <interactant intactId="EBI-1049597">
        <id>P27797</id>
    </interactant>
    <interactant intactId="EBI-11175533">
        <id>Q3SY56</id>
        <label>SP6</label>
    </interactant>
    <organismsDiffer>false</organismsDiffer>
    <experiments>3</experiments>
</comment>
<comment type="interaction">
    <interactant intactId="EBI-1049597">
        <id>P27797</id>
    </interactant>
    <interactant intactId="EBI-13322423">
        <id>Q96L03</id>
        <label>SPATA17</label>
    </interactant>
    <organismsDiffer>false</organismsDiffer>
    <experiments>3</experiments>
</comment>
<comment type="interaction">
    <interactant intactId="EBI-1049597">
        <id>P27797</id>
    </interactant>
    <interactant intactId="EBI-7082156">
        <id>Q7Z698</id>
        <label>SPRED2</label>
    </interactant>
    <organismsDiffer>false</organismsDiffer>
    <experiments>3</experiments>
</comment>
<comment type="interaction">
    <interactant intactId="EBI-1049597">
        <id>P27797</id>
    </interactant>
    <interactant intactId="EBI-1560239">
        <id>Q53T94</id>
        <label>TAF1B</label>
    </interactant>
    <organismsDiffer>false</organismsDiffer>
    <experiments>3</experiments>
</comment>
<comment type="interaction">
    <interactant intactId="EBI-1049597">
        <id>P27797</id>
    </interactant>
    <interactant intactId="EBI-25833693">
        <id>F6Y2X3</id>
        <label>TAFAZZIN</label>
    </interactant>
    <organismsDiffer>false</organismsDiffer>
    <experiments>3</experiments>
</comment>
<comment type="interaction">
    <interactant intactId="EBI-1049597">
        <id>P27797</id>
    </interactant>
    <interactant intactId="EBI-747259">
        <id>Q03518</id>
        <label>TAP1</label>
    </interactant>
    <organismsDiffer>false</organismsDiffer>
    <experiments>2</experiments>
</comment>
<comment type="interaction">
    <interactant intactId="EBI-1049597">
        <id>P27797</id>
    </interactant>
    <interactant intactId="EBI-743494">
        <id>P48775</id>
        <label>TDO2</label>
    </interactant>
    <organismsDiffer>false</organismsDiffer>
    <experiments>3</experiments>
</comment>
<comment type="interaction">
    <interactant intactId="EBI-1049597">
        <id>P27797</id>
    </interactant>
    <interactant intactId="EBI-741350">
        <id>Q9BT49</id>
        <label>THAP7</label>
    </interactant>
    <organismsDiffer>false</organismsDiffer>
    <experiments>3</experiments>
</comment>
<comment type="interaction">
    <interactant intactId="EBI-1049597">
        <id>P27797</id>
    </interactant>
    <interactant intactId="EBI-2530931">
        <id>P49746</id>
        <label>THBS3</label>
    </interactant>
    <organismsDiffer>false</organismsDiffer>
    <experiments>3</experiments>
</comment>
<comment type="interaction">
    <interactant intactId="EBI-1049597">
        <id>P27797</id>
    </interactant>
    <interactant intactId="EBI-25833898">
        <id>Q96JJ7-2</id>
        <label>TMX3</label>
    </interactant>
    <organismsDiffer>false</organismsDiffer>
    <experiments>3</experiments>
</comment>
<comment type="interaction">
    <interactant intactId="EBI-1049597">
        <id>P27797</id>
    </interactant>
    <interactant intactId="EBI-12003398">
        <id>Q9H2S6-2</id>
        <label>TNMD</label>
    </interactant>
    <organismsDiffer>false</organismsDiffer>
    <experiments>3</experiments>
</comment>
<comment type="interaction">
    <interactant intactId="EBI-1049597">
        <id>P27797</id>
    </interactant>
    <interactant intactId="EBI-9091010">
        <id>Q68CL5-3</id>
        <label>TPGS2</label>
    </interactant>
    <organismsDiffer>false</organismsDiffer>
    <experiments>3</experiments>
</comment>
<comment type="interaction">
    <interactant intactId="EBI-1049597">
        <id>P27797</id>
    </interactant>
    <interactant intactId="EBI-1037322">
        <id>Q9ULW0</id>
        <label>TPX2</label>
    </interactant>
    <organismsDiffer>false</organismsDiffer>
    <experiments>3</experiments>
</comment>
<comment type="interaction">
    <interactant intactId="EBI-1049597">
        <id>P27797</id>
    </interactant>
    <interactant intactId="EBI-12581310">
        <id>Q9NX07</id>
        <label>TRNAU1AP</label>
    </interactant>
    <organismsDiffer>false</organismsDiffer>
    <experiments>3</experiments>
</comment>
<comment type="interaction">
    <interactant intactId="EBI-1049597">
        <id>P27797</id>
    </interactant>
    <interactant intactId="EBI-350864">
        <id>P07437</id>
        <label>TUBB</label>
    </interactant>
    <organismsDiffer>false</organismsDiffer>
    <experiments>3</experiments>
</comment>
<comment type="interaction">
    <interactant intactId="EBI-1049597">
        <id>P27797</id>
    </interactant>
    <interactant intactId="EBI-25833730">
        <id>Q7Z780</id>
        <label>U2AF1</label>
    </interactant>
    <organismsDiffer>false</organismsDiffer>
    <experiments>3</experiments>
</comment>
<comment type="interaction">
    <interactant intactId="EBI-1049597">
        <id>P27797</id>
    </interactant>
    <interactant intactId="EBI-2511507">
        <id>O75317</id>
        <label>USP12</label>
    </interactant>
    <organismsDiffer>false</organismsDiffer>
    <experiments>3</experiments>
</comment>
<comment type="interaction">
    <interactant intactId="EBI-1049597">
        <id>P27797</id>
    </interactant>
    <interactant intactId="EBI-25830993">
        <id>Q96EF9</id>
        <label>ZHX1-C8orf76</label>
    </interactant>
    <organismsDiffer>false</organismsDiffer>
    <experiments>3</experiments>
</comment>
<comment type="interaction">
    <interactant intactId="EBI-1049597">
        <id>P27797</id>
    </interactant>
    <interactant intactId="EBI-22013570">
        <id>Q9BQ29</id>
    </interactant>
    <organismsDiffer>false</organismsDiffer>
    <experiments>3</experiments>
</comment>
<comment type="subcellular location">
    <subcellularLocation>
        <location evidence="7 9">Endoplasmic reticulum lumen</location>
    </subcellularLocation>
    <subcellularLocation>
        <location evidence="9">Cytoplasm</location>
        <location evidence="9">Cytosol</location>
    </subcellularLocation>
    <subcellularLocation>
        <location evidence="33">Secreted</location>
        <location evidence="33">Extracellular space</location>
        <location evidence="33">Extracellular matrix</location>
    </subcellularLocation>
    <subcellularLocation>
        <location evidence="7">Cell surface</location>
    </subcellularLocation>
    <subcellularLocation>
        <location evidence="4">Sarcoplasmic reticulum lumen</location>
    </subcellularLocation>
    <subcellularLocation>
        <location evidence="5">Cytoplasmic vesicle</location>
        <location evidence="5">Secretory vesicle</location>
        <location evidence="5">Cortical granule</location>
    </subcellularLocation>
    <subcellularLocation>
        <location evidence="27">Cytolytic granule</location>
    </subcellularLocation>
    <text evidence="4 5 27">Also found in cell surface (T cells), cytosol and extracellular matrix (PubMed:10358038). During oocyte maturation and after parthenogenetic activation accumulates in cortical granules. In pronuclear and early cleaved embryos localizes weakly to cytoplasm around nucleus and more strongly in the region near the cortex (By similarity). In cortical granules of non-activated oocytes, is exocytosed during the cortical reaction in response to oocyte activation (By similarity).</text>
</comment>
<comment type="domain">
    <text>Can be divided into a N-terminal globular domain, a proline-rich P-domain forming an elongated arm-like structure and a C-terminal acidic domain. The P-domain binds one molecule of calcium with high affinity, whereas the acidic C-domain binds multiple calcium ions with low affinity.</text>
</comment>
<comment type="domain">
    <text>The interaction with glycans occurs through a binding site in the globular lectin domain.</text>
</comment>
<comment type="domain">
    <text>The zinc binding sites are localized to the N-domain.</text>
</comment>
<comment type="domain">
    <text>Associates with PDIA3 through the tip of the extended arm formed by the P-domain.</text>
</comment>
<comment type="mass spectrometry"/>
<comment type="disease">
    <text evidence="19 20">CALR somatic mutations are frequently found in myeloproliferative neoplasms lacking JAK2 or MPL mutations. Myeloproliferative neoplasms are chronic myeloid cancers characterized by overproduction of mature blood cells, and may evolve into acute myeloid leukemia. In addition to chronic myeloid leukemia with the BCR-ABL fusion gene, the three most common myeloproliferative neoplasms are essential thrombocythemia, polycythemia vera, and myelofibrosis.</text>
</comment>
<comment type="similarity">
    <text evidence="33">Belongs to the calreticulin family.</text>
</comment>
<comment type="caution">
    <text evidence="34">Was originally thought to be the 52 kDa Ro autoantigen.</text>
</comment>
<comment type="online information" name="Wikipedia">
    <link uri="https://en.wikipedia.org/wiki/Calreticulin"/>
    <text>Calreticulin entry</text>
</comment>
<comment type="online information" name="Functional Glycomics Gateway - Glycan Binding">
    <link uri="http://www.functionalglycomics.org/glycomics/GBPServlet?&amp;operationType=view&amp;cbpId=cbp_hum_other_405"/>
    <text>Calreticulin</text>
</comment>
<proteinExistence type="evidence at protein level"/>
<dbReference type="EMBL" id="M32294">
    <property type="protein sequence ID" value="AAA36582.1"/>
    <property type="molecule type" value="mRNA"/>
</dbReference>
<dbReference type="EMBL" id="M84739">
    <property type="protein sequence ID" value="AAA51916.1"/>
    <property type="molecule type" value="mRNA"/>
</dbReference>
<dbReference type="EMBL" id="AY047586">
    <property type="protein sequence ID" value="AAL13126.1"/>
    <property type="molecule type" value="mRNA"/>
</dbReference>
<dbReference type="EMBL" id="AB451408">
    <property type="protein sequence ID" value="BAG70222.1"/>
    <property type="molecule type" value="mRNA"/>
</dbReference>
<dbReference type="EMBL" id="BT007448">
    <property type="protein sequence ID" value="AAP36116.1"/>
    <property type="molecule type" value="mRNA"/>
</dbReference>
<dbReference type="EMBL" id="CR457070">
    <property type="protein sequence ID" value="CAG33351.1"/>
    <property type="molecule type" value="mRNA"/>
</dbReference>
<dbReference type="EMBL" id="AD000092">
    <property type="protein sequence ID" value="AAB51176.1"/>
    <property type="molecule type" value="Genomic_DNA"/>
</dbReference>
<dbReference type="EMBL" id="CH471106">
    <property type="protein sequence ID" value="EAW84331.1"/>
    <property type="molecule type" value="Genomic_DNA"/>
</dbReference>
<dbReference type="EMBL" id="BC002500">
    <property type="protein sequence ID" value="AAH02500.1"/>
    <property type="molecule type" value="mRNA"/>
</dbReference>
<dbReference type="EMBL" id="BC007911">
    <property type="protein sequence ID" value="AAH07911.1"/>
    <property type="molecule type" value="mRNA"/>
</dbReference>
<dbReference type="EMBL" id="BC020493">
    <property type="protein sequence ID" value="AAH20493.1"/>
    <property type="molecule type" value="mRNA"/>
</dbReference>
<dbReference type="CCDS" id="CCDS12288.1"/>
<dbReference type="PIR" id="A42330">
    <property type="entry name" value="A37047"/>
</dbReference>
<dbReference type="RefSeq" id="NP_004334.1">
    <property type="nucleotide sequence ID" value="NM_004343.4"/>
</dbReference>
<dbReference type="PDB" id="2CLR">
    <property type="method" value="X-ray"/>
    <property type="resolution" value="2.00 A"/>
    <property type="chains" value="C/F=1-10"/>
</dbReference>
<dbReference type="PDB" id="3DOW">
    <property type="method" value="X-ray"/>
    <property type="resolution" value="2.30 A"/>
    <property type="chains" value="B=195-205"/>
</dbReference>
<dbReference type="PDB" id="3POS">
    <property type="method" value="X-ray"/>
    <property type="resolution" value="1.65 A"/>
    <property type="chains" value="A/B/C=18-204, A/B/C=302-368"/>
</dbReference>
<dbReference type="PDB" id="3POW">
    <property type="method" value="X-ray"/>
    <property type="resolution" value="1.55 A"/>
    <property type="chains" value="A=18-204, A=302-368"/>
</dbReference>
<dbReference type="PDB" id="5LK5">
    <property type="method" value="X-ray"/>
    <property type="resolution" value="2.30 A"/>
    <property type="chains" value="A/B/C/D/E/F/G/H/I/J=18-204, A/B/C/D/E/F/G/H/I/J=303-368"/>
</dbReference>
<dbReference type="PDB" id="5V90">
    <property type="method" value="X-ray"/>
    <property type="resolution" value="3.25 A"/>
    <property type="chains" value="B/D=238-273"/>
</dbReference>
<dbReference type="PDB" id="6ENY">
    <property type="method" value="EM"/>
    <property type="resolution" value="5.80 A"/>
    <property type="chains" value="G=18-417"/>
</dbReference>
<dbReference type="PDB" id="7QPD">
    <property type="method" value="EM"/>
    <property type="resolution" value="3.73 A"/>
    <property type="chains" value="C=18-417"/>
</dbReference>
<dbReference type="PDB" id="8TZO">
    <property type="method" value="EM"/>
    <property type="resolution" value="3.10 A"/>
    <property type="chains" value="C=1-417"/>
</dbReference>
<dbReference type="PDB" id="8TZR">
    <property type="method" value="EM"/>
    <property type="resolution" value="3.50 A"/>
    <property type="chains" value="C=1-417"/>
</dbReference>
<dbReference type="PDBsum" id="2CLR"/>
<dbReference type="PDBsum" id="3DOW"/>
<dbReference type="PDBsum" id="3POS"/>
<dbReference type="PDBsum" id="3POW"/>
<dbReference type="PDBsum" id="5LK5"/>
<dbReference type="PDBsum" id="5V90"/>
<dbReference type="PDBsum" id="6ENY"/>
<dbReference type="PDBsum" id="7QPD"/>
<dbReference type="PDBsum" id="8TZO"/>
<dbReference type="PDBsum" id="8TZR"/>
<dbReference type="BMRB" id="P27797"/>
<dbReference type="EMDB" id="EMD-14119"/>
<dbReference type="EMDB" id="EMD-3906"/>
<dbReference type="EMDB" id="EMD-41764"/>
<dbReference type="EMDB" id="EMD-41767"/>
<dbReference type="SMR" id="P27797"/>
<dbReference type="BioGRID" id="107262">
    <property type="interactions" value="468"/>
</dbReference>
<dbReference type="CORUM" id="P27797"/>
<dbReference type="DIP" id="DIP-104N"/>
<dbReference type="FunCoup" id="P27797">
    <property type="interactions" value="2816"/>
</dbReference>
<dbReference type="IntAct" id="P27797">
    <property type="interactions" value="198"/>
</dbReference>
<dbReference type="MINT" id="P27797"/>
<dbReference type="STRING" id="9606.ENSP00000320866"/>
<dbReference type="DrugBank" id="DB00025">
    <property type="generic name" value="Antihemophilic factor, human recombinant"/>
</dbReference>
<dbReference type="DrugBank" id="DB11093">
    <property type="generic name" value="Calcium citrate"/>
</dbReference>
<dbReference type="DrugBank" id="DB11348">
    <property type="generic name" value="Calcium Phosphate"/>
</dbReference>
<dbReference type="DrugBank" id="DB14481">
    <property type="generic name" value="Calcium phosphate dihydrate"/>
</dbReference>
<dbReference type="DrugBank" id="DB09130">
    <property type="generic name" value="Copper"/>
</dbReference>
<dbReference type="DrugBank" id="DB13949">
    <property type="generic name" value="Ferric cation"/>
</dbReference>
<dbReference type="DrugBank" id="DB06245">
    <property type="generic name" value="Lanoteplase"/>
</dbReference>
<dbReference type="DrugBank" id="DB13998">
    <property type="generic name" value="Lonoctocog alfa"/>
</dbReference>
<dbReference type="DrugBank" id="DB01065">
    <property type="generic name" value="Melatonin"/>
</dbReference>
<dbReference type="DrugBank" id="DB13999">
    <property type="generic name" value="Moroctocog alfa"/>
</dbReference>
<dbReference type="DrugBank" id="DB14520">
    <property type="generic name" value="Tetraferric tricitrate decahydrate"/>
</dbReference>
<dbReference type="MoonProt" id="P27797"/>
<dbReference type="TCDB" id="8.A.165.1.2">
    <property type="family name" value="the calnexin (calnexin) family"/>
</dbReference>
<dbReference type="UniLectin" id="P27797"/>
<dbReference type="GlyConnect" id="1060">
    <property type="glycosylation" value="10 N-Linked glycans (1 site)"/>
</dbReference>
<dbReference type="GlyCosmos" id="P27797">
    <property type="glycosylation" value="2 sites, 11 glycans"/>
</dbReference>
<dbReference type="GlyGen" id="P27797">
    <property type="glycosylation" value="8 sites, 37 N-linked glycans (1 site), 2 O-linked glycans (3 sites)"/>
</dbReference>
<dbReference type="iPTMnet" id="P27797"/>
<dbReference type="MetOSite" id="P27797"/>
<dbReference type="PhosphoSitePlus" id="P27797"/>
<dbReference type="SwissPalm" id="P27797"/>
<dbReference type="BioMuta" id="CALR"/>
<dbReference type="DMDM" id="117501"/>
<dbReference type="OGP" id="P27797"/>
<dbReference type="REPRODUCTION-2DPAGE" id="IPI00020599"/>
<dbReference type="CPTAC" id="CPTAC-33"/>
<dbReference type="CPTAC" id="CPTAC-34"/>
<dbReference type="CPTAC" id="CPTAC-698"/>
<dbReference type="jPOST" id="P27797"/>
<dbReference type="MassIVE" id="P27797"/>
<dbReference type="PaxDb" id="9606-ENSP00000320866"/>
<dbReference type="PeptideAtlas" id="P27797"/>
<dbReference type="PRIDE" id="P27797"/>
<dbReference type="ProteomicsDB" id="54410"/>
<dbReference type="Pumba" id="P27797"/>
<dbReference type="TopDownProteomics" id="P27797"/>
<dbReference type="ABCD" id="P27797">
    <property type="antibodies" value="3 sequenced antibodies"/>
</dbReference>
<dbReference type="Antibodypedia" id="1028">
    <property type="antibodies" value="1150 antibodies from 47 providers"/>
</dbReference>
<dbReference type="CPTC" id="P27797">
    <property type="antibodies" value="1 antibody"/>
</dbReference>
<dbReference type="DNASU" id="811"/>
<dbReference type="Ensembl" id="ENST00000316448.10">
    <property type="protein sequence ID" value="ENSP00000320866.4"/>
    <property type="gene ID" value="ENSG00000179218.15"/>
</dbReference>
<dbReference type="Ensembl" id="ENST00000586967.2">
    <property type="protein sequence ID" value="ENSP00000466037.2"/>
    <property type="gene ID" value="ENSG00000179218.15"/>
</dbReference>
<dbReference type="GeneID" id="811"/>
<dbReference type="KEGG" id="hsa:811"/>
<dbReference type="MANE-Select" id="ENST00000316448.10">
    <property type="protein sequence ID" value="ENSP00000320866.4"/>
    <property type="RefSeq nucleotide sequence ID" value="NM_004343.4"/>
    <property type="RefSeq protein sequence ID" value="NP_004334.1"/>
</dbReference>
<dbReference type="AGR" id="HGNC:1455"/>
<dbReference type="CTD" id="811"/>
<dbReference type="DisGeNET" id="811"/>
<dbReference type="GeneCards" id="CALR"/>
<dbReference type="HGNC" id="HGNC:1455">
    <property type="gene designation" value="CALR"/>
</dbReference>
<dbReference type="HPA" id="ENSG00000179218">
    <property type="expression patterns" value="Low tissue specificity"/>
</dbReference>
<dbReference type="MalaCards" id="CALR"/>
<dbReference type="MIM" id="109091">
    <property type="type" value="gene"/>
</dbReference>
<dbReference type="neXtProt" id="NX_P27797"/>
<dbReference type="OpenTargets" id="ENSG00000179218"/>
<dbReference type="Orphanet" id="131">
    <property type="disease" value="Budd-Chiari syndrome"/>
</dbReference>
<dbReference type="Orphanet" id="3318">
    <property type="disease" value="Essential thrombocythemia"/>
</dbReference>
<dbReference type="Orphanet" id="824">
    <property type="disease" value="Primary myelofibrosis"/>
</dbReference>
<dbReference type="PharmGKB" id="PA26046"/>
<dbReference type="VEuPathDB" id="HostDB:ENSG00000179218"/>
<dbReference type="eggNOG" id="KOG0674">
    <property type="taxonomic scope" value="Eukaryota"/>
</dbReference>
<dbReference type="GeneTree" id="ENSGT00950000182915"/>
<dbReference type="HOGENOM" id="CLU_018224_0_2_1"/>
<dbReference type="InParanoid" id="P27797"/>
<dbReference type="OMA" id="KRDEICA"/>
<dbReference type="OrthoDB" id="1938156at2759"/>
<dbReference type="PAN-GO" id="P27797">
    <property type="GO annotations" value="4 GO annotations based on evolutionary models"/>
</dbReference>
<dbReference type="PhylomeDB" id="P27797"/>
<dbReference type="TreeFam" id="TF338438"/>
<dbReference type="PathwayCommons" id="P27797"/>
<dbReference type="Reactome" id="R-HSA-1236974">
    <property type="pathway name" value="ER-Phagosome pathway"/>
</dbReference>
<dbReference type="Reactome" id="R-HSA-168316">
    <property type="pathway name" value="Assembly of Viral Components at the Budding Site"/>
</dbReference>
<dbReference type="Reactome" id="R-HSA-3000480">
    <property type="pathway name" value="Scavenging by Class A Receptors"/>
</dbReference>
<dbReference type="Reactome" id="R-HSA-3000484">
    <property type="pathway name" value="Scavenging by Class F Receptors"/>
</dbReference>
<dbReference type="Reactome" id="R-HSA-381183">
    <property type="pathway name" value="ATF6 (ATF6-alpha) activates chaperone genes"/>
</dbReference>
<dbReference type="Reactome" id="R-HSA-901042">
    <property type="pathway name" value="Calnexin/calreticulin cycle"/>
</dbReference>
<dbReference type="Reactome" id="R-HSA-983170">
    <property type="pathway name" value="Antigen Presentation: Folding, assembly and peptide loading of class I MHC"/>
</dbReference>
<dbReference type="SignaLink" id="P27797"/>
<dbReference type="BioGRID-ORCS" id="811">
    <property type="hits" value="32 hits in 1177 CRISPR screens"/>
</dbReference>
<dbReference type="CD-CODE" id="91857CE7">
    <property type="entry name" value="Nucleolus"/>
</dbReference>
<dbReference type="CD-CODE" id="DEE660B4">
    <property type="entry name" value="Stress granule"/>
</dbReference>
<dbReference type="ChiTaRS" id="CALR">
    <property type="organism name" value="human"/>
</dbReference>
<dbReference type="EvolutionaryTrace" id="P27797"/>
<dbReference type="GeneWiki" id="Calreticulin"/>
<dbReference type="GenomeRNAi" id="811"/>
<dbReference type="Pharos" id="P27797">
    <property type="development level" value="Tbio"/>
</dbReference>
<dbReference type="PRO" id="PR:P27797"/>
<dbReference type="Proteomes" id="UP000005640">
    <property type="component" value="Chromosome 19"/>
</dbReference>
<dbReference type="RNAct" id="P27797">
    <property type="molecule type" value="protein"/>
</dbReference>
<dbReference type="Bgee" id="ENSG00000179218">
    <property type="expression patterns" value="Expressed in stromal cell of endometrium and 205 other cell types or tissues"/>
</dbReference>
<dbReference type="ExpressionAtlas" id="P27797">
    <property type="expression patterns" value="baseline and differential"/>
</dbReference>
<dbReference type="GO" id="GO:0001669">
    <property type="term" value="C:acrosomal vesicle"/>
    <property type="evidence" value="ECO:0007669"/>
    <property type="project" value="Ensembl"/>
</dbReference>
<dbReference type="GO" id="GO:0009986">
    <property type="term" value="C:cell surface"/>
    <property type="evidence" value="ECO:0000304"/>
    <property type="project" value="BHF-UCL"/>
</dbReference>
<dbReference type="GO" id="GO:0060473">
    <property type="term" value="C:cortical granule"/>
    <property type="evidence" value="ECO:0000250"/>
    <property type="project" value="UniProtKB"/>
</dbReference>
<dbReference type="GO" id="GO:0044194">
    <property type="term" value="C:cytolytic granule"/>
    <property type="evidence" value="ECO:0007669"/>
    <property type="project" value="UniProtKB-SubCell"/>
</dbReference>
<dbReference type="GO" id="GO:0005737">
    <property type="term" value="C:cytoplasm"/>
    <property type="evidence" value="ECO:0000314"/>
    <property type="project" value="BHF-UCL"/>
</dbReference>
<dbReference type="GO" id="GO:0005829">
    <property type="term" value="C:cytosol"/>
    <property type="evidence" value="ECO:0000314"/>
    <property type="project" value="UniProtKB"/>
</dbReference>
<dbReference type="GO" id="GO:0071682">
    <property type="term" value="C:endocytic vesicle lumen"/>
    <property type="evidence" value="ECO:0000304"/>
    <property type="project" value="Reactome"/>
</dbReference>
<dbReference type="GO" id="GO:0005783">
    <property type="term" value="C:endoplasmic reticulum"/>
    <property type="evidence" value="ECO:0000314"/>
    <property type="project" value="MGI"/>
</dbReference>
<dbReference type="GO" id="GO:0005788">
    <property type="term" value="C:endoplasmic reticulum lumen"/>
    <property type="evidence" value="ECO:0000314"/>
    <property type="project" value="UniProtKB"/>
</dbReference>
<dbReference type="GO" id="GO:0005789">
    <property type="term" value="C:endoplasmic reticulum membrane"/>
    <property type="evidence" value="ECO:0000318"/>
    <property type="project" value="GO_Central"/>
</dbReference>
<dbReference type="GO" id="GO:0044322">
    <property type="term" value="C:endoplasmic reticulum quality control compartment"/>
    <property type="evidence" value="ECO:0007669"/>
    <property type="project" value="Ensembl"/>
</dbReference>
<dbReference type="GO" id="GO:0033116">
    <property type="term" value="C:endoplasmic reticulum-Golgi intermediate compartment membrane"/>
    <property type="evidence" value="ECO:0000304"/>
    <property type="project" value="Reactome"/>
</dbReference>
<dbReference type="GO" id="GO:0009897">
    <property type="term" value="C:external side of plasma membrane"/>
    <property type="evidence" value="ECO:0007669"/>
    <property type="project" value="Ensembl"/>
</dbReference>
<dbReference type="GO" id="GO:0070062">
    <property type="term" value="C:extracellular exosome"/>
    <property type="evidence" value="ECO:0007005"/>
    <property type="project" value="UniProtKB"/>
</dbReference>
<dbReference type="GO" id="GO:0005576">
    <property type="term" value="C:extracellular region"/>
    <property type="evidence" value="ECO:0000304"/>
    <property type="project" value="Reactome"/>
</dbReference>
<dbReference type="GO" id="GO:0005615">
    <property type="term" value="C:extracellular space"/>
    <property type="evidence" value="ECO:0000315"/>
    <property type="project" value="CAFA"/>
</dbReference>
<dbReference type="GO" id="GO:0005925">
    <property type="term" value="C:focal adhesion"/>
    <property type="evidence" value="ECO:0007005"/>
    <property type="project" value="UniProtKB"/>
</dbReference>
<dbReference type="GO" id="GO:0098978">
    <property type="term" value="C:glutamatergic synapse"/>
    <property type="evidence" value="ECO:0007669"/>
    <property type="project" value="Ensembl"/>
</dbReference>
<dbReference type="GO" id="GO:0098553">
    <property type="term" value="C:lumenal side of endoplasmic reticulum membrane"/>
    <property type="evidence" value="ECO:0000304"/>
    <property type="project" value="Reactome"/>
</dbReference>
<dbReference type="GO" id="GO:0016020">
    <property type="term" value="C:membrane"/>
    <property type="evidence" value="ECO:0000314"/>
    <property type="project" value="MGI"/>
</dbReference>
<dbReference type="GO" id="GO:0042824">
    <property type="term" value="C:MHC class I peptide loading complex"/>
    <property type="evidence" value="ECO:0000314"/>
    <property type="project" value="UniProtKB"/>
</dbReference>
<dbReference type="GO" id="GO:0005739">
    <property type="term" value="C:mitochondrion"/>
    <property type="evidence" value="ECO:0007669"/>
    <property type="project" value="Ensembl"/>
</dbReference>
<dbReference type="GO" id="GO:0005635">
    <property type="term" value="C:nuclear envelope"/>
    <property type="evidence" value="ECO:0000314"/>
    <property type="project" value="UniProtKB"/>
</dbReference>
<dbReference type="GO" id="GO:0005634">
    <property type="term" value="C:nucleus"/>
    <property type="evidence" value="ECO:0000314"/>
    <property type="project" value="BHF-UCL"/>
</dbReference>
<dbReference type="GO" id="GO:0048471">
    <property type="term" value="C:perinuclear region of cytoplasm"/>
    <property type="evidence" value="ECO:0000314"/>
    <property type="project" value="BHF-UCL"/>
</dbReference>
<dbReference type="GO" id="GO:0030670">
    <property type="term" value="C:phagocytic vesicle membrane"/>
    <property type="evidence" value="ECO:0000304"/>
    <property type="project" value="Reactome"/>
</dbReference>
<dbReference type="GO" id="GO:0098794">
    <property type="term" value="C:postsynapse"/>
    <property type="evidence" value="ECO:0007669"/>
    <property type="project" value="Ensembl"/>
</dbReference>
<dbReference type="GO" id="GO:0005840">
    <property type="term" value="C:ribosome"/>
    <property type="evidence" value="ECO:0000314"/>
    <property type="project" value="BHF-UCL"/>
</dbReference>
<dbReference type="GO" id="GO:0033018">
    <property type="term" value="C:sarcoplasmic reticulum lumen"/>
    <property type="evidence" value="ECO:0007669"/>
    <property type="project" value="UniProtKB-SubCell"/>
</dbReference>
<dbReference type="GO" id="GO:0005790">
    <property type="term" value="C:smooth endoplasmic reticulum"/>
    <property type="evidence" value="ECO:0007669"/>
    <property type="project" value="Ensembl"/>
</dbReference>
<dbReference type="GO" id="GO:0005509">
    <property type="term" value="F:calcium ion binding"/>
    <property type="evidence" value="ECO:0000314"/>
    <property type="project" value="UniProtKB"/>
</dbReference>
<dbReference type="GO" id="GO:0030246">
    <property type="term" value="F:carbohydrate binding"/>
    <property type="evidence" value="ECO:0000304"/>
    <property type="project" value="BHF-UCL"/>
</dbReference>
<dbReference type="GO" id="GO:0001849">
    <property type="term" value="F:complement component C1q complex binding"/>
    <property type="evidence" value="ECO:0000353"/>
    <property type="project" value="DisProt"/>
</dbReference>
<dbReference type="GO" id="GO:0003677">
    <property type="term" value="F:DNA binding"/>
    <property type="evidence" value="ECO:0000303"/>
    <property type="project" value="UniProtKB"/>
</dbReference>
<dbReference type="GO" id="GO:0042562">
    <property type="term" value="F:hormone binding"/>
    <property type="evidence" value="ECO:0007669"/>
    <property type="project" value="Ensembl"/>
</dbReference>
<dbReference type="GO" id="GO:0005178">
    <property type="term" value="F:integrin binding"/>
    <property type="evidence" value="ECO:0000353"/>
    <property type="project" value="BHF-UCL"/>
</dbReference>
<dbReference type="GO" id="GO:0005506">
    <property type="term" value="F:iron ion binding"/>
    <property type="evidence" value="ECO:0007669"/>
    <property type="project" value="Ensembl"/>
</dbReference>
<dbReference type="GO" id="GO:0140313">
    <property type="term" value="F:molecular sequestering activity"/>
    <property type="evidence" value="ECO:0000314"/>
    <property type="project" value="UniProt"/>
</dbReference>
<dbReference type="GO" id="GO:0003729">
    <property type="term" value="F:mRNA binding"/>
    <property type="evidence" value="ECO:0000314"/>
    <property type="project" value="BHF-UCL"/>
</dbReference>
<dbReference type="GO" id="GO:0050681">
    <property type="term" value="F:nuclear androgen receptor binding"/>
    <property type="evidence" value="ECO:0000314"/>
    <property type="project" value="BHF-UCL"/>
</dbReference>
<dbReference type="GO" id="GO:0005049">
    <property type="term" value="F:nuclear export signal receptor activity"/>
    <property type="evidence" value="ECO:0000314"/>
    <property type="project" value="DisProt"/>
</dbReference>
<dbReference type="GO" id="GO:0042277">
    <property type="term" value="F:peptide binding"/>
    <property type="evidence" value="ECO:0007669"/>
    <property type="project" value="Ensembl"/>
</dbReference>
<dbReference type="GO" id="GO:0044183">
    <property type="term" value="F:protein folding chaperone"/>
    <property type="evidence" value="ECO:0000314"/>
    <property type="project" value="BHF-UCL"/>
</dbReference>
<dbReference type="GO" id="GO:0051087">
    <property type="term" value="F:protein-folding chaperone binding"/>
    <property type="evidence" value="ECO:0000304"/>
    <property type="project" value="BHF-UCL"/>
</dbReference>
<dbReference type="GO" id="GO:0003723">
    <property type="term" value="F:RNA binding"/>
    <property type="evidence" value="ECO:0007005"/>
    <property type="project" value="UniProtKB"/>
</dbReference>
<dbReference type="GO" id="GO:0031625">
    <property type="term" value="F:ubiquitin protein ligase binding"/>
    <property type="evidence" value="ECO:0000353"/>
    <property type="project" value="UniProtKB"/>
</dbReference>
<dbReference type="GO" id="GO:0051082">
    <property type="term" value="F:unfolded protein binding"/>
    <property type="evidence" value="ECO:0000304"/>
    <property type="project" value="BHF-UCL"/>
</dbReference>
<dbReference type="GO" id="GO:0008270">
    <property type="term" value="F:zinc ion binding"/>
    <property type="evidence" value="ECO:0000304"/>
    <property type="project" value="BHF-UCL"/>
</dbReference>
<dbReference type="GO" id="GO:0055007">
    <property type="term" value="P:cardiac muscle cell differentiation"/>
    <property type="evidence" value="ECO:0007669"/>
    <property type="project" value="Ensembl"/>
</dbReference>
<dbReference type="GO" id="GO:0071257">
    <property type="term" value="P:cellular response to electrical stimulus"/>
    <property type="evidence" value="ECO:0007669"/>
    <property type="project" value="Ensembl"/>
</dbReference>
<dbReference type="GO" id="GO:0071285">
    <property type="term" value="P:cellular response to lithium ion"/>
    <property type="evidence" value="ECO:0007669"/>
    <property type="project" value="Ensembl"/>
</dbReference>
<dbReference type="GO" id="GO:0098586">
    <property type="term" value="P:cellular response to virus"/>
    <property type="evidence" value="ECO:0007669"/>
    <property type="project" value="Ensembl"/>
</dbReference>
<dbReference type="GO" id="GO:0090398">
    <property type="term" value="P:cellular senescence"/>
    <property type="evidence" value="ECO:0000316"/>
    <property type="project" value="BHF-UCL"/>
</dbReference>
<dbReference type="GO" id="GO:0030866">
    <property type="term" value="P:cortical actin cytoskeleton organization"/>
    <property type="evidence" value="ECO:0007669"/>
    <property type="project" value="Ensembl"/>
</dbReference>
<dbReference type="GO" id="GO:0036503">
    <property type="term" value="P:ERAD pathway"/>
    <property type="evidence" value="ECO:0000318"/>
    <property type="project" value="GO_Central"/>
</dbReference>
<dbReference type="GO" id="GO:0006874">
    <property type="term" value="P:intracellular calcium ion homeostasis"/>
    <property type="evidence" value="ECO:0000304"/>
    <property type="project" value="UniProtKB"/>
</dbReference>
<dbReference type="GO" id="GO:0045892">
    <property type="term" value="P:negative regulation of DNA-templated transcription"/>
    <property type="evidence" value="ECO:0000314"/>
    <property type="project" value="BHF-UCL"/>
</dbReference>
<dbReference type="GO" id="GO:0033144">
    <property type="term" value="P:negative regulation of intracellular steroid hormone receptor signaling pathway"/>
    <property type="evidence" value="ECO:0000314"/>
    <property type="project" value="BHF-UCL"/>
</dbReference>
<dbReference type="GO" id="GO:0045665">
    <property type="term" value="P:negative regulation of neuron differentiation"/>
    <property type="evidence" value="ECO:0000314"/>
    <property type="project" value="BHF-UCL"/>
</dbReference>
<dbReference type="GO" id="GO:0048387">
    <property type="term" value="P:negative regulation of retinoic acid receptor signaling pathway"/>
    <property type="evidence" value="ECO:0000314"/>
    <property type="project" value="BHF-UCL"/>
</dbReference>
<dbReference type="GO" id="GO:0000122">
    <property type="term" value="P:negative regulation of transcription by RNA polymerase II"/>
    <property type="evidence" value="ECO:0000314"/>
    <property type="project" value="BHF-UCL"/>
</dbReference>
<dbReference type="GO" id="GO:0017148">
    <property type="term" value="P:negative regulation of translation"/>
    <property type="evidence" value="ECO:0000314"/>
    <property type="project" value="BHF-UCL"/>
</dbReference>
<dbReference type="GO" id="GO:1901164">
    <property type="term" value="P:negative regulation of trophoblast cell migration"/>
    <property type="evidence" value="ECO:0000315"/>
    <property type="project" value="CAFA"/>
</dbReference>
<dbReference type="GO" id="GO:0042921">
    <property type="term" value="P:nuclear receptor-mediated glucocorticoid signaling pathway"/>
    <property type="evidence" value="ECO:0000304"/>
    <property type="project" value="BHF-UCL"/>
</dbReference>
<dbReference type="GO" id="GO:0002502">
    <property type="term" value="P:peptide antigen assembly with MHC class I protein complex"/>
    <property type="evidence" value="ECO:0000314"/>
    <property type="project" value="UniProt"/>
</dbReference>
<dbReference type="GO" id="GO:0045787">
    <property type="term" value="P:positive regulation of cell cycle"/>
    <property type="evidence" value="ECO:0000316"/>
    <property type="project" value="BHF-UCL"/>
</dbReference>
<dbReference type="GO" id="GO:0008284">
    <property type="term" value="P:positive regulation of cell population proliferation"/>
    <property type="evidence" value="ECO:0000316"/>
    <property type="project" value="BHF-UCL"/>
</dbReference>
<dbReference type="GO" id="GO:2000510">
    <property type="term" value="P:positive regulation of dendritic cell chemotaxis"/>
    <property type="evidence" value="ECO:0000315"/>
    <property type="project" value="UniProtKB"/>
</dbReference>
<dbReference type="GO" id="GO:0010595">
    <property type="term" value="P:positive regulation of endothelial cell migration"/>
    <property type="evidence" value="ECO:0000315"/>
    <property type="project" value="CAFA"/>
</dbReference>
<dbReference type="GO" id="GO:0010628">
    <property type="term" value="P:positive regulation of gene expression"/>
    <property type="evidence" value="ECO:0007669"/>
    <property type="project" value="Ensembl"/>
</dbReference>
<dbReference type="GO" id="GO:1901224">
    <property type="term" value="P:positive regulation of non-canonical NF-kappaB signal transduction"/>
    <property type="evidence" value="ECO:0007669"/>
    <property type="project" value="Ensembl"/>
</dbReference>
<dbReference type="GO" id="GO:0050766">
    <property type="term" value="P:positive regulation of phagocytosis"/>
    <property type="evidence" value="ECO:0000250"/>
    <property type="project" value="BHF-UCL"/>
</dbReference>
<dbReference type="GO" id="GO:1900026">
    <property type="term" value="P:positive regulation of substrate adhesion-dependent cell spreading"/>
    <property type="evidence" value="ECO:0000315"/>
    <property type="project" value="UniProtKB"/>
</dbReference>
<dbReference type="GO" id="GO:0006611">
    <property type="term" value="P:protein export from nucleus"/>
    <property type="evidence" value="ECO:0000314"/>
    <property type="project" value="UniProtKB"/>
</dbReference>
<dbReference type="GO" id="GO:0006457">
    <property type="term" value="P:protein folding"/>
    <property type="evidence" value="ECO:0000314"/>
    <property type="project" value="BHF-UCL"/>
</dbReference>
<dbReference type="GO" id="GO:0034975">
    <property type="term" value="P:protein folding in endoplasmic reticulum"/>
    <property type="evidence" value="ECO:0000304"/>
    <property type="project" value="ParkinsonsUK-UCL"/>
</dbReference>
<dbReference type="GO" id="GO:0034504">
    <property type="term" value="P:protein localization to nucleus"/>
    <property type="evidence" value="ECO:0000314"/>
    <property type="project" value="UniProtKB"/>
</dbReference>
<dbReference type="GO" id="GO:0051604">
    <property type="term" value="P:protein maturation"/>
    <property type="evidence" value="ECO:0000314"/>
    <property type="project" value="BHF-UCL"/>
</dbReference>
<dbReference type="GO" id="GO:0050821">
    <property type="term" value="P:protein stabilization"/>
    <property type="evidence" value="ECO:0000314"/>
    <property type="project" value="BHF-UCL"/>
</dbReference>
<dbReference type="GO" id="GO:0042981">
    <property type="term" value="P:regulation of apoptotic process"/>
    <property type="evidence" value="ECO:0000304"/>
    <property type="project" value="UniProtKB"/>
</dbReference>
<dbReference type="GO" id="GO:0006355">
    <property type="term" value="P:regulation of DNA-templated transcription"/>
    <property type="evidence" value="ECO:0000304"/>
    <property type="project" value="ProtInc"/>
</dbReference>
<dbReference type="GO" id="GO:0040020">
    <property type="term" value="P:regulation of meiotic nuclear division"/>
    <property type="evidence" value="ECO:0007669"/>
    <property type="project" value="Ensembl"/>
</dbReference>
<dbReference type="GO" id="GO:1904614">
    <property type="term" value="P:response to biphenyl"/>
    <property type="evidence" value="ECO:0007669"/>
    <property type="project" value="Ensembl"/>
</dbReference>
<dbReference type="GO" id="GO:0032355">
    <property type="term" value="P:response to estradiol"/>
    <property type="evidence" value="ECO:0007669"/>
    <property type="project" value="Ensembl"/>
</dbReference>
<dbReference type="GO" id="GO:1903416">
    <property type="term" value="P:response to glycoside"/>
    <property type="evidence" value="ECO:0007669"/>
    <property type="project" value="Ensembl"/>
</dbReference>
<dbReference type="GO" id="GO:1901652">
    <property type="term" value="P:response to peptide"/>
    <property type="evidence" value="ECO:0007669"/>
    <property type="project" value="Ensembl"/>
</dbReference>
<dbReference type="GO" id="GO:0033574">
    <property type="term" value="P:response to testosterone"/>
    <property type="evidence" value="ECO:0007669"/>
    <property type="project" value="Ensembl"/>
</dbReference>
<dbReference type="GO" id="GO:0009410">
    <property type="term" value="P:response to xenobiotic stimulus"/>
    <property type="evidence" value="ECO:0007669"/>
    <property type="project" value="Ensembl"/>
</dbReference>
<dbReference type="GO" id="GO:0051208">
    <property type="term" value="P:sequestering of calcium ion"/>
    <property type="evidence" value="ECO:0000304"/>
    <property type="project" value="BHF-UCL"/>
</dbReference>
<dbReference type="GO" id="GO:0007283">
    <property type="term" value="P:spermatogenesis"/>
    <property type="evidence" value="ECO:0007669"/>
    <property type="project" value="Ensembl"/>
</dbReference>
<dbReference type="FunFam" id="2.10.250.10:FF:000002">
    <property type="entry name" value="Calreticulin"/>
    <property type="match status" value="1"/>
</dbReference>
<dbReference type="FunFam" id="2.60.120.200:FF:000113">
    <property type="entry name" value="Calreticulin 3"/>
    <property type="match status" value="1"/>
</dbReference>
<dbReference type="FunFam" id="2.60.120.200:FF:000122">
    <property type="entry name" value="Calreticulin 3"/>
    <property type="match status" value="1"/>
</dbReference>
<dbReference type="Gene3D" id="2.60.120.200">
    <property type="match status" value="1"/>
</dbReference>
<dbReference type="Gene3D" id="2.10.250.10">
    <property type="entry name" value="Calreticulin/calnexin, P domain"/>
    <property type="match status" value="1"/>
</dbReference>
<dbReference type="InterPro" id="IPR001580">
    <property type="entry name" value="Calret/calnex"/>
</dbReference>
<dbReference type="InterPro" id="IPR018124">
    <property type="entry name" value="Calret/calnex_CS"/>
</dbReference>
<dbReference type="InterPro" id="IPR009169">
    <property type="entry name" value="Calreticulin"/>
</dbReference>
<dbReference type="InterPro" id="IPR009033">
    <property type="entry name" value="Calreticulin/calnexin_P_dom_sf"/>
</dbReference>
<dbReference type="InterPro" id="IPR013320">
    <property type="entry name" value="ConA-like_dom_sf"/>
</dbReference>
<dbReference type="PANTHER" id="PTHR11073:SF16">
    <property type="entry name" value="CALRETICULIN"/>
    <property type="match status" value="1"/>
</dbReference>
<dbReference type="PANTHER" id="PTHR11073">
    <property type="entry name" value="CALRETICULIN AND CALNEXIN"/>
    <property type="match status" value="1"/>
</dbReference>
<dbReference type="Pfam" id="PF00262">
    <property type="entry name" value="Calreticulin"/>
    <property type="match status" value="2"/>
</dbReference>
<dbReference type="PIRSF" id="PIRSF002356">
    <property type="entry name" value="Calreticulin"/>
    <property type="match status" value="1"/>
</dbReference>
<dbReference type="PRINTS" id="PR00626">
    <property type="entry name" value="CALRETICULIN"/>
</dbReference>
<dbReference type="SUPFAM" id="SSF49899">
    <property type="entry name" value="Concanavalin A-like lectins/glucanases"/>
    <property type="match status" value="1"/>
</dbReference>
<dbReference type="SUPFAM" id="SSF63887">
    <property type="entry name" value="P-domain of calnexin/calreticulin"/>
    <property type="match status" value="1"/>
</dbReference>
<dbReference type="PROSITE" id="PS00803">
    <property type="entry name" value="CALRETICULIN_1"/>
    <property type="match status" value="1"/>
</dbReference>
<dbReference type="PROSITE" id="PS00804">
    <property type="entry name" value="CALRETICULIN_2"/>
    <property type="match status" value="1"/>
</dbReference>
<dbReference type="PROSITE" id="PS00805">
    <property type="entry name" value="CALRETICULIN_REPEAT"/>
    <property type="match status" value="3"/>
</dbReference>
<dbReference type="PROSITE" id="PS00014">
    <property type="entry name" value="ER_TARGET"/>
    <property type="match status" value="1"/>
</dbReference>
<organism>
    <name type="scientific">Homo sapiens</name>
    <name type="common">Human</name>
    <dbReference type="NCBI Taxonomy" id="9606"/>
    <lineage>
        <taxon>Eukaryota</taxon>
        <taxon>Metazoa</taxon>
        <taxon>Chordata</taxon>
        <taxon>Craniata</taxon>
        <taxon>Vertebrata</taxon>
        <taxon>Euteleostomi</taxon>
        <taxon>Mammalia</taxon>
        <taxon>Eutheria</taxon>
        <taxon>Euarchontoglires</taxon>
        <taxon>Primates</taxon>
        <taxon>Haplorrhini</taxon>
        <taxon>Catarrhini</taxon>
        <taxon>Hominidae</taxon>
        <taxon>Homo</taxon>
    </lineage>
</organism>
<accession>P27797</accession>
<accession>Q6IAT4</accession>
<accession>Q9UDG2</accession>